<proteinExistence type="evidence at protein level"/>
<dbReference type="EMBL" id="AF002020">
    <property type="protein sequence ID" value="AAB63982.1"/>
    <property type="molecule type" value="mRNA"/>
</dbReference>
<dbReference type="EMBL" id="AF157379">
    <property type="protein sequence ID" value="AAD48006.1"/>
    <property type="molecule type" value="Genomic_DNA"/>
</dbReference>
<dbReference type="EMBL" id="AF157365">
    <property type="protein sequence ID" value="AAD48006.1"/>
    <property type="status" value="JOINED"/>
    <property type="molecule type" value="Genomic_DNA"/>
</dbReference>
<dbReference type="EMBL" id="AF157366">
    <property type="protein sequence ID" value="AAD48006.1"/>
    <property type="status" value="JOINED"/>
    <property type="molecule type" value="Genomic_DNA"/>
</dbReference>
<dbReference type="EMBL" id="AF157367">
    <property type="protein sequence ID" value="AAD48006.1"/>
    <property type="status" value="JOINED"/>
    <property type="molecule type" value="Genomic_DNA"/>
</dbReference>
<dbReference type="EMBL" id="AF157368">
    <property type="protein sequence ID" value="AAD48006.1"/>
    <property type="status" value="JOINED"/>
    <property type="molecule type" value="Genomic_DNA"/>
</dbReference>
<dbReference type="EMBL" id="AF157369">
    <property type="protein sequence ID" value="AAD48006.1"/>
    <property type="status" value="JOINED"/>
    <property type="molecule type" value="Genomic_DNA"/>
</dbReference>
<dbReference type="EMBL" id="AF157370">
    <property type="protein sequence ID" value="AAD48006.1"/>
    <property type="status" value="JOINED"/>
    <property type="molecule type" value="Genomic_DNA"/>
</dbReference>
<dbReference type="EMBL" id="AF157371">
    <property type="protein sequence ID" value="AAD48006.1"/>
    <property type="status" value="JOINED"/>
    <property type="molecule type" value="Genomic_DNA"/>
</dbReference>
<dbReference type="EMBL" id="AF157372">
    <property type="protein sequence ID" value="AAD48006.1"/>
    <property type="status" value="JOINED"/>
    <property type="molecule type" value="Genomic_DNA"/>
</dbReference>
<dbReference type="EMBL" id="AF157373">
    <property type="protein sequence ID" value="AAD48006.1"/>
    <property type="status" value="JOINED"/>
    <property type="molecule type" value="Genomic_DNA"/>
</dbReference>
<dbReference type="EMBL" id="AF157374">
    <property type="protein sequence ID" value="AAD48006.1"/>
    <property type="status" value="JOINED"/>
    <property type="molecule type" value="Genomic_DNA"/>
</dbReference>
<dbReference type="EMBL" id="AF157375">
    <property type="protein sequence ID" value="AAD48006.1"/>
    <property type="status" value="JOINED"/>
    <property type="molecule type" value="Genomic_DNA"/>
</dbReference>
<dbReference type="EMBL" id="AF157376">
    <property type="protein sequence ID" value="AAD48006.1"/>
    <property type="status" value="JOINED"/>
    <property type="molecule type" value="Genomic_DNA"/>
</dbReference>
<dbReference type="EMBL" id="AF157377">
    <property type="protein sequence ID" value="AAD48006.1"/>
    <property type="status" value="JOINED"/>
    <property type="molecule type" value="Genomic_DNA"/>
</dbReference>
<dbReference type="EMBL" id="AF157378">
    <property type="protein sequence ID" value="AAD48006.1"/>
    <property type="status" value="JOINED"/>
    <property type="molecule type" value="Genomic_DNA"/>
</dbReference>
<dbReference type="EMBL" id="AF338230">
    <property type="protein sequence ID" value="AAK25791.1"/>
    <property type="molecule type" value="Genomic_DNA"/>
</dbReference>
<dbReference type="EMBL" id="AH009108">
    <property type="protein sequence ID" value="AAF28875.1"/>
    <property type="molecule type" value="Genomic_DNA"/>
</dbReference>
<dbReference type="EMBL" id="AK293779">
    <property type="protein sequence ID" value="BAG57194.1"/>
    <property type="molecule type" value="mRNA"/>
</dbReference>
<dbReference type="EMBL" id="AC010853">
    <property type="status" value="NOT_ANNOTATED_CDS"/>
    <property type="molecule type" value="Genomic_DNA"/>
</dbReference>
<dbReference type="EMBL" id="AC026634">
    <property type="status" value="NOT_ANNOTATED_CDS"/>
    <property type="molecule type" value="Genomic_DNA"/>
</dbReference>
<dbReference type="EMBL" id="BC063302">
    <property type="protein sequence ID" value="AAH63302.1"/>
    <property type="molecule type" value="mRNA"/>
</dbReference>
<dbReference type="CCDS" id="CCDS11878.1">
    <molecule id="O15118-1"/>
</dbReference>
<dbReference type="RefSeq" id="NP_000262.2">
    <molecule id="O15118-1"/>
    <property type="nucleotide sequence ID" value="NM_000271.5"/>
</dbReference>
<dbReference type="PDB" id="3GKH">
    <property type="method" value="X-ray"/>
    <property type="resolution" value="1.81 A"/>
    <property type="chains" value="A=23-252"/>
</dbReference>
<dbReference type="PDB" id="3GKI">
    <property type="method" value="X-ray"/>
    <property type="resolution" value="1.80 A"/>
    <property type="chains" value="A=23-252"/>
</dbReference>
<dbReference type="PDB" id="3GKJ">
    <property type="method" value="X-ray"/>
    <property type="resolution" value="1.60 A"/>
    <property type="chains" value="A=23-252"/>
</dbReference>
<dbReference type="PDB" id="3JD8">
    <property type="method" value="EM"/>
    <property type="resolution" value="4.43 A"/>
    <property type="chains" value="A=1-1278"/>
</dbReference>
<dbReference type="PDB" id="5F18">
    <property type="method" value="X-ray"/>
    <property type="resolution" value="2.00 A"/>
    <property type="chains" value="A=374-620"/>
</dbReference>
<dbReference type="PDB" id="5F1B">
    <property type="method" value="X-ray"/>
    <property type="resolution" value="2.30 A"/>
    <property type="chains" value="C=374-620"/>
</dbReference>
<dbReference type="PDB" id="5HNS">
    <property type="method" value="X-ray"/>
    <property type="resolution" value="2.45 A"/>
    <property type="chains" value="A/B=387-618"/>
</dbReference>
<dbReference type="PDB" id="5JNX">
    <property type="method" value="EM"/>
    <property type="resolution" value="6.56 A"/>
    <property type="chains" value="A=1-1278"/>
</dbReference>
<dbReference type="PDB" id="5KWY">
    <property type="method" value="X-ray"/>
    <property type="resolution" value="2.40 A"/>
    <property type="chains" value="A/B=374-620"/>
</dbReference>
<dbReference type="PDB" id="5U73">
    <property type="method" value="X-ray"/>
    <property type="resolution" value="3.35 A"/>
    <property type="chains" value="A=1-1278"/>
</dbReference>
<dbReference type="PDB" id="5U74">
    <property type="method" value="X-ray"/>
    <property type="resolution" value="3.33 A"/>
    <property type="chains" value="A=1-1278"/>
</dbReference>
<dbReference type="PDB" id="6UOX">
    <property type="method" value="EM"/>
    <property type="resolution" value="4.13 A"/>
    <property type="chains" value="A=1-1278"/>
</dbReference>
<dbReference type="PDB" id="6W5R">
    <property type="method" value="EM"/>
    <property type="resolution" value="3.60 A"/>
    <property type="chains" value="A=1-1278"/>
</dbReference>
<dbReference type="PDB" id="6W5S">
    <property type="method" value="EM"/>
    <property type="resolution" value="3.00 A"/>
    <property type="chains" value="A=1-1278"/>
</dbReference>
<dbReference type="PDB" id="6W5T">
    <property type="method" value="EM"/>
    <property type="resolution" value="3.70 A"/>
    <property type="chains" value="A=1-1278"/>
</dbReference>
<dbReference type="PDB" id="6W5U">
    <property type="method" value="EM"/>
    <property type="resolution" value="3.90 A"/>
    <property type="chains" value="A=1-1278"/>
</dbReference>
<dbReference type="PDB" id="6W5V">
    <property type="method" value="EM"/>
    <property type="resolution" value="4.00 A"/>
    <property type="chains" value="A=1-1278"/>
</dbReference>
<dbReference type="PDB" id="8EUS">
    <property type="method" value="X-ray"/>
    <property type="resolution" value="2.30 A"/>
    <property type="chains" value="A/C=370-621"/>
</dbReference>
<dbReference type="PDB" id="9DZ2">
    <property type="method" value="EM"/>
    <property type="resolution" value="3.31 A"/>
    <property type="chains" value="C/D=374-620"/>
</dbReference>
<dbReference type="PDBsum" id="3GKH"/>
<dbReference type="PDBsum" id="3GKI"/>
<dbReference type="PDBsum" id="3GKJ"/>
<dbReference type="PDBsum" id="3JD8"/>
<dbReference type="PDBsum" id="5F18"/>
<dbReference type="PDBsum" id="5F1B"/>
<dbReference type="PDBsum" id="5HNS"/>
<dbReference type="PDBsum" id="5JNX"/>
<dbReference type="PDBsum" id="5KWY"/>
<dbReference type="PDBsum" id="5U73"/>
<dbReference type="PDBsum" id="5U74"/>
<dbReference type="PDBsum" id="6UOX"/>
<dbReference type="PDBsum" id="6W5R"/>
<dbReference type="PDBsum" id="6W5S"/>
<dbReference type="PDBsum" id="6W5T"/>
<dbReference type="PDBsum" id="6W5U"/>
<dbReference type="PDBsum" id="6W5V"/>
<dbReference type="PDBsum" id="8EUS"/>
<dbReference type="PDBsum" id="9DZ2"/>
<dbReference type="EMDB" id="EMD-20834"/>
<dbReference type="EMDB" id="EMD-21545"/>
<dbReference type="EMDB" id="EMD-21546"/>
<dbReference type="EMDB" id="EMD-21547"/>
<dbReference type="EMDB" id="EMD-21548"/>
<dbReference type="EMDB" id="EMD-21549"/>
<dbReference type="EMDB" id="EMD-47323"/>
<dbReference type="EMDB" id="EMD-6640"/>
<dbReference type="EMDB" id="EMD-6641"/>
<dbReference type="EMDB" id="EMD-8169"/>
<dbReference type="SMR" id="O15118"/>
<dbReference type="BioGRID" id="110925">
    <property type="interactions" value="397"/>
</dbReference>
<dbReference type="DIP" id="DIP-53217N"/>
<dbReference type="ELM" id="O15118"/>
<dbReference type="FunCoup" id="O15118">
    <property type="interactions" value="2349"/>
</dbReference>
<dbReference type="IntAct" id="O15118">
    <property type="interactions" value="48"/>
</dbReference>
<dbReference type="MINT" id="O15118"/>
<dbReference type="STRING" id="9606.ENSP00000269228"/>
<dbReference type="BindingDB" id="O15118"/>
<dbReference type="ChEMBL" id="CHEMBL1293277"/>
<dbReference type="SwissLipids" id="SLP:000000478"/>
<dbReference type="TCDB" id="2.A.6.6.1">
    <property type="family name" value="the resistance-nodulation-cell division (rnd) superfamily"/>
</dbReference>
<dbReference type="GlyConnect" id="1571">
    <property type="glycosylation" value="3 N-Linked glycans (2 sites)"/>
</dbReference>
<dbReference type="GlyCosmos" id="O15118">
    <property type="glycosylation" value="19 sites, 3 glycans"/>
</dbReference>
<dbReference type="GlyGen" id="O15118">
    <property type="glycosylation" value="28 sites, 31 N-linked glycans (10 sites), 1 O-linked glycan (1 site)"/>
</dbReference>
<dbReference type="iPTMnet" id="O15118"/>
<dbReference type="PhosphoSitePlus" id="O15118"/>
<dbReference type="SwissPalm" id="O15118"/>
<dbReference type="BioMuta" id="NPC1"/>
<dbReference type="jPOST" id="O15118"/>
<dbReference type="MassIVE" id="O15118"/>
<dbReference type="PaxDb" id="9606-ENSP00000269228"/>
<dbReference type="PeptideAtlas" id="O15118"/>
<dbReference type="ProteomicsDB" id="3980"/>
<dbReference type="ProteomicsDB" id="48453">
    <molecule id="O15118-1"/>
</dbReference>
<dbReference type="Pumba" id="O15118"/>
<dbReference type="Antibodypedia" id="7463">
    <property type="antibodies" value="420 antibodies from 38 providers"/>
</dbReference>
<dbReference type="DNASU" id="4864"/>
<dbReference type="Ensembl" id="ENST00000269228.10">
    <molecule id="O15118-1"/>
    <property type="protein sequence ID" value="ENSP00000269228.4"/>
    <property type="gene ID" value="ENSG00000141458.13"/>
</dbReference>
<dbReference type="GeneID" id="4864"/>
<dbReference type="KEGG" id="hsa:4864"/>
<dbReference type="MANE-Select" id="ENST00000269228.10">
    <property type="protein sequence ID" value="ENSP00000269228.4"/>
    <property type="RefSeq nucleotide sequence ID" value="NM_000271.5"/>
    <property type="RefSeq protein sequence ID" value="NP_000262.2"/>
</dbReference>
<dbReference type="UCSC" id="uc002kum.5">
    <molecule id="O15118-1"/>
    <property type="organism name" value="human"/>
</dbReference>
<dbReference type="AGR" id="HGNC:7897"/>
<dbReference type="CTD" id="4864"/>
<dbReference type="DisGeNET" id="4864"/>
<dbReference type="GeneCards" id="NPC1"/>
<dbReference type="GeneReviews" id="NPC1"/>
<dbReference type="HGNC" id="HGNC:7897">
    <property type="gene designation" value="NPC1"/>
</dbReference>
<dbReference type="HPA" id="ENSG00000141458">
    <property type="expression patterns" value="Low tissue specificity"/>
</dbReference>
<dbReference type="MalaCards" id="NPC1"/>
<dbReference type="MIM" id="257220">
    <property type="type" value="phenotype"/>
</dbReference>
<dbReference type="MIM" id="607623">
    <property type="type" value="gene"/>
</dbReference>
<dbReference type="neXtProt" id="NX_O15118"/>
<dbReference type="OpenTargets" id="ENSG00000141458"/>
<dbReference type="Orphanet" id="216986">
    <property type="disease" value="Niemann-Pick disease type C, adult neurologic onset"/>
</dbReference>
<dbReference type="Orphanet" id="216981">
    <property type="disease" value="Niemann-Pick disease type C, juvenile neurologic onset"/>
</dbReference>
<dbReference type="Orphanet" id="216978">
    <property type="disease" value="Niemann-Pick disease type C, late infantile neurologic onset"/>
</dbReference>
<dbReference type="Orphanet" id="216975">
    <property type="disease" value="Niemann-Pick disease type C, severe early infantile neurologic onset"/>
</dbReference>
<dbReference type="Orphanet" id="216972">
    <property type="disease" value="Niemann-Pick disease type C, severe perinatal form"/>
</dbReference>
<dbReference type="PharmGKB" id="PA31698"/>
<dbReference type="VEuPathDB" id="HostDB:ENSG00000141458"/>
<dbReference type="eggNOG" id="KOG1933">
    <property type="taxonomic scope" value="Eukaryota"/>
</dbReference>
<dbReference type="GeneTree" id="ENSGT00940000156182"/>
<dbReference type="InParanoid" id="O15118"/>
<dbReference type="OMA" id="WWFDVES"/>
<dbReference type="OrthoDB" id="6510177at2759"/>
<dbReference type="PAN-GO" id="O15118">
    <property type="GO annotations" value="4 GO annotations based on evolutionary models"/>
</dbReference>
<dbReference type="PhylomeDB" id="O15118"/>
<dbReference type="TreeFam" id="TF300416"/>
<dbReference type="PathwayCommons" id="O15118"/>
<dbReference type="Reactome" id="R-HSA-8964038">
    <property type="pathway name" value="LDL clearance"/>
</dbReference>
<dbReference type="SignaLink" id="O15118"/>
<dbReference type="BioGRID-ORCS" id="4864">
    <property type="hits" value="54 hits in 1188 CRISPR screens"/>
</dbReference>
<dbReference type="ChiTaRS" id="NPC1">
    <property type="organism name" value="human"/>
</dbReference>
<dbReference type="EvolutionaryTrace" id="O15118"/>
<dbReference type="GeneWiki" id="NPC1"/>
<dbReference type="GenomeRNAi" id="4864"/>
<dbReference type="Pharos" id="O15118">
    <property type="development level" value="Tchem"/>
</dbReference>
<dbReference type="PRO" id="PR:O15118"/>
<dbReference type="Proteomes" id="UP000005640">
    <property type="component" value="Chromosome 18"/>
</dbReference>
<dbReference type="RNAct" id="O15118">
    <property type="molecule type" value="protein"/>
</dbReference>
<dbReference type="Bgee" id="ENSG00000141458">
    <property type="expression patterns" value="Expressed in secondary oocyte and 196 other cell types or tissues"/>
</dbReference>
<dbReference type="ExpressionAtlas" id="O15118">
    <property type="expression patterns" value="baseline and differential"/>
</dbReference>
<dbReference type="GO" id="GO:0005783">
    <property type="term" value="C:endoplasmic reticulum"/>
    <property type="evidence" value="ECO:0000314"/>
    <property type="project" value="UniProtKB"/>
</dbReference>
<dbReference type="GO" id="GO:0070062">
    <property type="term" value="C:extracellular exosome"/>
    <property type="evidence" value="ECO:0007005"/>
    <property type="project" value="UniProtKB"/>
</dbReference>
<dbReference type="GO" id="GO:0005576">
    <property type="term" value="C:extracellular region"/>
    <property type="evidence" value="ECO:0000250"/>
    <property type="project" value="UniProtKB"/>
</dbReference>
<dbReference type="GO" id="GO:0005794">
    <property type="term" value="C:Golgi apparatus"/>
    <property type="evidence" value="ECO:0007669"/>
    <property type="project" value="Ensembl"/>
</dbReference>
<dbReference type="GO" id="GO:0031902">
    <property type="term" value="C:late endosome membrane"/>
    <property type="evidence" value="ECO:0000315"/>
    <property type="project" value="UniProtKB"/>
</dbReference>
<dbReference type="GO" id="GO:0005765">
    <property type="term" value="C:lysosomal membrane"/>
    <property type="evidence" value="ECO:0000314"/>
    <property type="project" value="UniProtKB"/>
</dbReference>
<dbReference type="GO" id="GO:0005764">
    <property type="term" value="C:lysosome"/>
    <property type="evidence" value="ECO:0000250"/>
    <property type="project" value="UniProtKB"/>
</dbReference>
<dbReference type="GO" id="GO:0016020">
    <property type="term" value="C:membrane"/>
    <property type="evidence" value="ECO:0007005"/>
    <property type="project" value="UniProtKB"/>
</dbReference>
<dbReference type="GO" id="GO:0045121">
    <property type="term" value="C:membrane raft"/>
    <property type="evidence" value="ECO:0007669"/>
    <property type="project" value="Ensembl"/>
</dbReference>
<dbReference type="GO" id="GO:0005635">
    <property type="term" value="C:nuclear envelope"/>
    <property type="evidence" value="ECO:0000314"/>
    <property type="project" value="UniProtKB"/>
</dbReference>
<dbReference type="GO" id="GO:0048471">
    <property type="term" value="C:perinuclear region of cytoplasm"/>
    <property type="evidence" value="ECO:0000314"/>
    <property type="project" value="UniProtKB"/>
</dbReference>
<dbReference type="GO" id="GO:0005886">
    <property type="term" value="C:plasma membrane"/>
    <property type="evidence" value="ECO:0000314"/>
    <property type="project" value="UniProtKB"/>
</dbReference>
<dbReference type="GO" id="GO:0015485">
    <property type="term" value="F:cholesterol binding"/>
    <property type="evidence" value="ECO:0000314"/>
    <property type="project" value="UniProtKB"/>
</dbReference>
<dbReference type="GO" id="GO:0120020">
    <property type="term" value="F:cholesterol transfer activity"/>
    <property type="evidence" value="ECO:0000315"/>
    <property type="project" value="UniProtKB"/>
</dbReference>
<dbReference type="GO" id="GO:0038023">
    <property type="term" value="F:signaling receptor activity"/>
    <property type="evidence" value="ECO:0000304"/>
    <property type="project" value="ProtInc"/>
</dbReference>
<dbReference type="GO" id="GO:0004888">
    <property type="term" value="F:transmembrane signaling receptor activity"/>
    <property type="evidence" value="ECO:0000304"/>
    <property type="project" value="ProtInc"/>
</dbReference>
<dbReference type="GO" id="GO:0001618">
    <property type="term" value="F:virus receptor activity"/>
    <property type="evidence" value="ECO:0007669"/>
    <property type="project" value="UniProtKB-KW"/>
</dbReference>
<dbReference type="GO" id="GO:0007628">
    <property type="term" value="P:adult walking behavior"/>
    <property type="evidence" value="ECO:0007669"/>
    <property type="project" value="Ensembl"/>
</dbReference>
<dbReference type="GO" id="GO:0006914">
    <property type="term" value="P:autophagy"/>
    <property type="evidence" value="ECO:0000316"/>
    <property type="project" value="MGI"/>
</dbReference>
<dbReference type="GO" id="GO:0008206">
    <property type="term" value="P:bile acid metabolic process"/>
    <property type="evidence" value="ECO:0000250"/>
    <property type="project" value="UniProtKB"/>
</dbReference>
<dbReference type="GO" id="GO:0071404">
    <property type="term" value="P:cellular response to low-density lipoprotein particle stimulus"/>
    <property type="evidence" value="ECO:0007669"/>
    <property type="project" value="Ensembl"/>
</dbReference>
<dbReference type="GO" id="GO:0071383">
    <property type="term" value="P:cellular response to steroid hormone stimulus"/>
    <property type="evidence" value="ECO:0007669"/>
    <property type="project" value="Ensembl"/>
</dbReference>
<dbReference type="GO" id="GO:0033344">
    <property type="term" value="P:cholesterol efflux"/>
    <property type="evidence" value="ECO:0000314"/>
    <property type="project" value="BHF-UCL"/>
</dbReference>
<dbReference type="GO" id="GO:0042632">
    <property type="term" value="P:cholesterol homeostasis"/>
    <property type="evidence" value="ECO:0000314"/>
    <property type="project" value="UniProtKB"/>
</dbReference>
<dbReference type="GO" id="GO:0008203">
    <property type="term" value="P:cholesterol metabolic process"/>
    <property type="evidence" value="ECO:0007669"/>
    <property type="project" value="UniProtKB-KW"/>
</dbReference>
<dbReference type="GO" id="GO:0010878">
    <property type="term" value="P:cholesterol storage"/>
    <property type="evidence" value="ECO:0007669"/>
    <property type="project" value="Ensembl"/>
</dbReference>
<dbReference type="GO" id="GO:0030301">
    <property type="term" value="P:cholesterol transport"/>
    <property type="evidence" value="ECO:0000314"/>
    <property type="project" value="UniProtKB"/>
</dbReference>
<dbReference type="GO" id="GO:2000900">
    <property type="term" value="P:cyclodextrin metabolic process"/>
    <property type="evidence" value="ECO:0007669"/>
    <property type="project" value="Ensembl"/>
</dbReference>
<dbReference type="GO" id="GO:0006897">
    <property type="term" value="P:endocytosis"/>
    <property type="evidence" value="ECO:0007669"/>
    <property type="project" value="Ensembl"/>
</dbReference>
<dbReference type="GO" id="GO:0090150">
    <property type="term" value="P:establishment of protein localization to membrane"/>
    <property type="evidence" value="ECO:0000314"/>
    <property type="project" value="UniProtKB"/>
</dbReference>
<dbReference type="GO" id="GO:0010467">
    <property type="term" value="P:gene expression"/>
    <property type="evidence" value="ECO:0007669"/>
    <property type="project" value="Ensembl"/>
</dbReference>
<dbReference type="GO" id="GO:0030299">
    <property type="term" value="P:intestinal cholesterol absorption"/>
    <property type="evidence" value="ECO:0000318"/>
    <property type="project" value="GO_Central"/>
</dbReference>
<dbReference type="GO" id="GO:0032367">
    <property type="term" value="P:intracellular cholesterol transport"/>
    <property type="evidence" value="ECO:0000315"/>
    <property type="project" value="UniProtKB"/>
</dbReference>
<dbReference type="GO" id="GO:0032365">
    <property type="term" value="P:intracellular lipid transport"/>
    <property type="evidence" value="ECO:0000315"/>
    <property type="project" value="UniProtKB"/>
</dbReference>
<dbReference type="GO" id="GO:0001889">
    <property type="term" value="P:liver development"/>
    <property type="evidence" value="ECO:0007669"/>
    <property type="project" value="Ensembl"/>
</dbReference>
<dbReference type="GO" id="GO:0007041">
    <property type="term" value="P:lysosomal transport"/>
    <property type="evidence" value="ECO:0000250"/>
    <property type="project" value="UniProtKB"/>
</dbReference>
<dbReference type="GO" id="GO:0016236">
    <property type="term" value="P:macroautophagy"/>
    <property type="evidence" value="ECO:0007669"/>
    <property type="project" value="Ensembl"/>
</dbReference>
<dbReference type="GO" id="GO:0031579">
    <property type="term" value="P:membrane raft organization"/>
    <property type="evidence" value="ECO:0000315"/>
    <property type="project" value="UniProtKB"/>
</dbReference>
<dbReference type="GO" id="GO:1904036">
    <property type="term" value="P:negative regulation of epithelial cell apoptotic process"/>
    <property type="evidence" value="ECO:0007669"/>
    <property type="project" value="Ensembl"/>
</dbReference>
<dbReference type="GO" id="GO:0016242">
    <property type="term" value="P:negative regulation of macroautophagy"/>
    <property type="evidence" value="ECO:0007669"/>
    <property type="project" value="Ensembl"/>
</dbReference>
<dbReference type="GO" id="GO:1904262">
    <property type="term" value="P:negative regulation of TORC1 signaling"/>
    <property type="evidence" value="ECO:0000314"/>
    <property type="project" value="UniProtKB"/>
</dbReference>
<dbReference type="GO" id="GO:0022008">
    <property type="term" value="P:neurogenesis"/>
    <property type="evidence" value="ECO:0007669"/>
    <property type="project" value="Ensembl"/>
</dbReference>
<dbReference type="GO" id="GO:0012501">
    <property type="term" value="P:programmed cell death"/>
    <property type="evidence" value="ECO:0007669"/>
    <property type="project" value="Ensembl"/>
</dbReference>
<dbReference type="GO" id="GO:0006486">
    <property type="term" value="P:protein glycosylation"/>
    <property type="evidence" value="ECO:0000314"/>
    <property type="project" value="UniProtKB"/>
</dbReference>
<dbReference type="GO" id="GO:0046686">
    <property type="term" value="P:response to cadmium ion"/>
    <property type="evidence" value="ECO:0007669"/>
    <property type="project" value="Ensembl"/>
</dbReference>
<dbReference type="GO" id="GO:0009410">
    <property type="term" value="P:response to xenobiotic stimulus"/>
    <property type="evidence" value="ECO:0007669"/>
    <property type="project" value="Ensembl"/>
</dbReference>
<dbReference type="GO" id="GO:0015918">
    <property type="term" value="P:sterol transport"/>
    <property type="evidence" value="ECO:0000318"/>
    <property type="project" value="GO_Central"/>
</dbReference>
<dbReference type="GO" id="GO:0046718">
    <property type="term" value="P:symbiont entry into host cell"/>
    <property type="evidence" value="ECO:0000315"/>
    <property type="project" value="CACAO"/>
</dbReference>
<dbReference type="FunFam" id="1.20.1640.10:FF:000008">
    <property type="entry name" value="NPC intracellular cholesterol transporter 1"/>
    <property type="match status" value="1"/>
</dbReference>
<dbReference type="FunFam" id="1.20.1640.10:FF:000010">
    <property type="entry name" value="NPC intracellular cholesterol transporter 1"/>
    <property type="match status" value="1"/>
</dbReference>
<dbReference type="Gene3D" id="1.20.1640.10">
    <property type="entry name" value="Multidrug efflux transporter AcrB transmembrane domain"/>
    <property type="match status" value="2"/>
</dbReference>
<dbReference type="InterPro" id="IPR053958">
    <property type="entry name" value="HMGCR/SNAP/NPC1-like_SSD"/>
</dbReference>
<dbReference type="InterPro" id="IPR004765">
    <property type="entry name" value="NPC1-like"/>
</dbReference>
<dbReference type="InterPro" id="IPR053956">
    <property type="entry name" value="NPC1_MLD"/>
</dbReference>
<dbReference type="InterPro" id="IPR032190">
    <property type="entry name" value="NPC1_N"/>
</dbReference>
<dbReference type="InterPro" id="IPR000731">
    <property type="entry name" value="SSD"/>
</dbReference>
<dbReference type="NCBIfam" id="TIGR00917">
    <property type="entry name" value="2A060601"/>
    <property type="match status" value="1"/>
</dbReference>
<dbReference type="PANTHER" id="PTHR45727">
    <property type="entry name" value="NPC INTRACELLULAR CHOLESTEROL TRANSPORTER 1"/>
    <property type="match status" value="1"/>
</dbReference>
<dbReference type="PANTHER" id="PTHR45727:SF2">
    <property type="entry name" value="NPC INTRACELLULAR CHOLESTEROL TRANSPORTER 1"/>
    <property type="match status" value="1"/>
</dbReference>
<dbReference type="Pfam" id="PF22314">
    <property type="entry name" value="NPC1_MLD"/>
    <property type="match status" value="1"/>
</dbReference>
<dbReference type="Pfam" id="PF16414">
    <property type="entry name" value="NPC1_N"/>
    <property type="match status" value="1"/>
</dbReference>
<dbReference type="Pfam" id="PF12349">
    <property type="entry name" value="Sterol-sensing"/>
    <property type="match status" value="1"/>
</dbReference>
<dbReference type="SUPFAM" id="SSF82866">
    <property type="entry name" value="Multidrug efflux transporter AcrB transmembrane domain"/>
    <property type="match status" value="2"/>
</dbReference>
<dbReference type="PROSITE" id="PS50156">
    <property type="entry name" value="SSD"/>
    <property type="match status" value="1"/>
</dbReference>
<protein>
    <recommendedName>
        <fullName evidence="47">NPC intracellular cholesterol transporter 1</fullName>
    </recommendedName>
    <alternativeName>
        <fullName evidence="43">Niemann-Pick C1 protein</fullName>
    </alternativeName>
</protein>
<reference key="1">
    <citation type="journal article" date="1997" name="Science">
        <title>Niemann-Pick C1 disease gene: homology to mediators of cholesterol homeostasis.</title>
        <authorList>
            <person name="Carstea E.D."/>
            <person name="Morris J.A."/>
            <person name="Coleman K.G."/>
            <person name="Loftus S.K."/>
            <person name="Zhang D."/>
            <person name="Cummings C."/>
            <person name="Gu J."/>
            <person name="Rosenfeld M.A."/>
            <person name="Pavan W.J."/>
            <person name="Krizman D.B."/>
            <person name="Nagle J."/>
            <person name="Polymeropoulos M.H."/>
            <person name="Sturley S.L."/>
            <person name="Ioannou Y.A."/>
            <person name="Higgins M.E."/>
            <person name="Comly M."/>
            <person name="Cooney A."/>
            <person name="Brown A."/>
            <person name="Kaneski C.R."/>
            <person name="Blanchette-Mackie E.J."/>
            <person name="Dwyer N.K."/>
            <person name="Neufeld E.B."/>
            <person name="Chang T.-Y."/>
            <person name="Liscum L."/>
            <person name="Strauss J.F. III"/>
            <person name="Ohno K."/>
            <person name="Zeigler M."/>
            <person name="Carmi R."/>
            <person name="Sokol J."/>
            <person name="Markie D."/>
            <person name="O'Neill R.R."/>
            <person name="van Diggelen O.P."/>
            <person name="Elleder M."/>
            <person name="Patterson M.C."/>
            <person name="Brady R.O."/>
            <person name="Vanier M.T."/>
            <person name="Pentchev P.G."/>
            <person name="Tagle D.A."/>
        </authorList>
    </citation>
    <scope>NUCLEOTIDE SEQUENCE [MRNA] (ISOFORM 1)</scope>
    <scope>FUNCTION</scope>
    <scope>INVOLVEMENT IN NPC1</scope>
    <scope>VARIANT NPC1 PRO-928</scope>
    <scope>VARIANT ILE-642</scope>
</reference>
<reference key="2">
    <citation type="journal article" date="1999" name="Biochem. Biophys. Res. Commun.">
        <title>The genomic organization and polymorphism analysis of the human Niemann-Pick C1 gene.</title>
        <authorList>
            <person name="Morris J.A."/>
            <person name="Zhang D."/>
            <person name="Coleman K.G."/>
            <person name="Nagle J."/>
            <person name="Pentchev P.G."/>
            <person name="Carstea E.D."/>
        </authorList>
    </citation>
    <scope>NUCLEOTIDE SEQUENCE [GENOMIC DNA]</scope>
    <scope>VARIANTS</scope>
</reference>
<reference key="3">
    <citation type="journal article" date="2002" name="Hum. Mutat.">
        <title>NPC1: complete genomic sequence, mutation analysis, and characterization of haplotypes.</title>
        <authorList>
            <person name="Bauer P."/>
            <person name="Knoblich R."/>
            <person name="Bauer C."/>
            <person name="Finckh U."/>
            <person name="Hufen A."/>
            <person name="Kropp J."/>
            <person name="Braun S."/>
            <person name="Kustermann-Kuhn B."/>
            <person name="Schmidt D."/>
            <person name="Harzer K."/>
            <person name="Rolfs A."/>
        </authorList>
    </citation>
    <scope>NUCLEOTIDE SEQUENCE [GENOMIC DNA]</scope>
    <scope>VARIANTS NPC1 ARG-512; TRP-670; CYS-825; ILE-849; VAL-874; TYR-948; LEU-954; LEU-958; ALA-1007 AND THR-1061</scope>
    <scope>VARIANTS ARG-215; ILE-642; VAL-858; GLY-971 AND VAL-1049</scope>
</reference>
<reference key="4">
    <citation type="journal article" date="2004" name="Nat. Genet.">
        <title>Complete sequencing and characterization of 21,243 full-length human cDNAs.</title>
        <authorList>
            <person name="Ota T."/>
            <person name="Suzuki Y."/>
            <person name="Nishikawa T."/>
            <person name="Otsuki T."/>
            <person name="Sugiyama T."/>
            <person name="Irie R."/>
            <person name="Wakamatsu A."/>
            <person name="Hayashi K."/>
            <person name="Sato H."/>
            <person name="Nagai K."/>
            <person name="Kimura K."/>
            <person name="Makita H."/>
            <person name="Sekine M."/>
            <person name="Obayashi M."/>
            <person name="Nishi T."/>
            <person name="Shibahara T."/>
            <person name="Tanaka T."/>
            <person name="Ishii S."/>
            <person name="Yamamoto J."/>
            <person name="Saito K."/>
            <person name="Kawai Y."/>
            <person name="Isono Y."/>
            <person name="Nakamura Y."/>
            <person name="Nagahari K."/>
            <person name="Murakami K."/>
            <person name="Yasuda T."/>
            <person name="Iwayanagi T."/>
            <person name="Wagatsuma M."/>
            <person name="Shiratori A."/>
            <person name="Sudo H."/>
            <person name="Hosoiri T."/>
            <person name="Kaku Y."/>
            <person name="Kodaira H."/>
            <person name="Kondo H."/>
            <person name="Sugawara M."/>
            <person name="Takahashi M."/>
            <person name="Kanda K."/>
            <person name="Yokoi T."/>
            <person name="Furuya T."/>
            <person name="Kikkawa E."/>
            <person name="Omura Y."/>
            <person name="Abe K."/>
            <person name="Kamihara K."/>
            <person name="Katsuta N."/>
            <person name="Sato K."/>
            <person name="Tanikawa M."/>
            <person name="Yamazaki M."/>
            <person name="Ninomiya K."/>
            <person name="Ishibashi T."/>
            <person name="Yamashita H."/>
            <person name="Murakawa K."/>
            <person name="Fujimori K."/>
            <person name="Tanai H."/>
            <person name="Kimata M."/>
            <person name="Watanabe M."/>
            <person name="Hiraoka S."/>
            <person name="Chiba Y."/>
            <person name="Ishida S."/>
            <person name="Ono Y."/>
            <person name="Takiguchi S."/>
            <person name="Watanabe S."/>
            <person name="Yosida M."/>
            <person name="Hotuta T."/>
            <person name="Kusano J."/>
            <person name="Kanehori K."/>
            <person name="Takahashi-Fujii A."/>
            <person name="Hara H."/>
            <person name="Tanase T.-O."/>
            <person name="Nomura Y."/>
            <person name="Togiya S."/>
            <person name="Komai F."/>
            <person name="Hara R."/>
            <person name="Takeuchi K."/>
            <person name="Arita M."/>
            <person name="Imose N."/>
            <person name="Musashino K."/>
            <person name="Yuuki H."/>
            <person name="Oshima A."/>
            <person name="Sasaki N."/>
            <person name="Aotsuka S."/>
            <person name="Yoshikawa Y."/>
            <person name="Matsunawa H."/>
            <person name="Ichihara T."/>
            <person name="Shiohata N."/>
            <person name="Sano S."/>
            <person name="Moriya S."/>
            <person name="Momiyama H."/>
            <person name="Satoh N."/>
            <person name="Takami S."/>
            <person name="Terashima Y."/>
            <person name="Suzuki O."/>
            <person name="Nakagawa S."/>
            <person name="Senoh A."/>
            <person name="Mizoguchi H."/>
            <person name="Goto Y."/>
            <person name="Shimizu F."/>
            <person name="Wakebe H."/>
            <person name="Hishigaki H."/>
            <person name="Watanabe T."/>
            <person name="Sugiyama A."/>
            <person name="Takemoto M."/>
            <person name="Kawakami B."/>
            <person name="Yamazaki M."/>
            <person name="Watanabe K."/>
            <person name="Kumagai A."/>
            <person name="Itakura S."/>
            <person name="Fukuzumi Y."/>
            <person name="Fujimori Y."/>
            <person name="Komiyama M."/>
            <person name="Tashiro H."/>
            <person name="Tanigami A."/>
            <person name="Fujiwara T."/>
            <person name="Ono T."/>
            <person name="Yamada K."/>
            <person name="Fujii Y."/>
            <person name="Ozaki K."/>
            <person name="Hirao M."/>
            <person name="Ohmori Y."/>
            <person name="Kawabata A."/>
            <person name="Hikiji T."/>
            <person name="Kobatake N."/>
            <person name="Inagaki H."/>
            <person name="Ikema Y."/>
            <person name="Okamoto S."/>
            <person name="Okitani R."/>
            <person name="Kawakami T."/>
            <person name="Noguchi S."/>
            <person name="Itoh T."/>
            <person name="Shigeta K."/>
            <person name="Senba T."/>
            <person name="Matsumura K."/>
            <person name="Nakajima Y."/>
            <person name="Mizuno T."/>
            <person name="Morinaga M."/>
            <person name="Sasaki M."/>
            <person name="Togashi T."/>
            <person name="Oyama M."/>
            <person name="Hata H."/>
            <person name="Watanabe M."/>
            <person name="Komatsu T."/>
            <person name="Mizushima-Sugano J."/>
            <person name="Satoh T."/>
            <person name="Shirai Y."/>
            <person name="Takahashi Y."/>
            <person name="Nakagawa K."/>
            <person name="Okumura K."/>
            <person name="Nagase T."/>
            <person name="Nomura N."/>
            <person name="Kikuchi H."/>
            <person name="Masuho Y."/>
            <person name="Yamashita R."/>
            <person name="Nakai K."/>
            <person name="Yada T."/>
            <person name="Nakamura Y."/>
            <person name="Ohara O."/>
            <person name="Isogai T."/>
            <person name="Sugano S."/>
        </authorList>
    </citation>
    <scope>NUCLEOTIDE SEQUENCE [LARGE SCALE MRNA] (ISOFORM 2)</scope>
    <source>
        <tissue>Cerebellum</tissue>
    </source>
</reference>
<reference key="5">
    <citation type="journal article" date="2005" name="Nature">
        <title>DNA sequence and analysis of human chromosome 18.</title>
        <authorList>
            <person name="Nusbaum C."/>
            <person name="Zody M.C."/>
            <person name="Borowsky M.L."/>
            <person name="Kamal M."/>
            <person name="Kodira C.D."/>
            <person name="Taylor T.D."/>
            <person name="Whittaker C.A."/>
            <person name="Chang J.L."/>
            <person name="Cuomo C.A."/>
            <person name="Dewar K."/>
            <person name="FitzGerald M.G."/>
            <person name="Yang X."/>
            <person name="Abouelleil A."/>
            <person name="Allen N.R."/>
            <person name="Anderson S."/>
            <person name="Bloom T."/>
            <person name="Bugalter B."/>
            <person name="Butler J."/>
            <person name="Cook A."/>
            <person name="DeCaprio D."/>
            <person name="Engels R."/>
            <person name="Garber M."/>
            <person name="Gnirke A."/>
            <person name="Hafez N."/>
            <person name="Hall J.L."/>
            <person name="Norman C.H."/>
            <person name="Itoh T."/>
            <person name="Jaffe D.B."/>
            <person name="Kuroki Y."/>
            <person name="Lehoczky J."/>
            <person name="Lui A."/>
            <person name="Macdonald P."/>
            <person name="Mauceli E."/>
            <person name="Mikkelsen T.S."/>
            <person name="Naylor J.W."/>
            <person name="Nicol R."/>
            <person name="Nguyen C."/>
            <person name="Noguchi H."/>
            <person name="O'Leary S.B."/>
            <person name="Piqani B."/>
            <person name="Smith C.L."/>
            <person name="Talamas J.A."/>
            <person name="Topham K."/>
            <person name="Totoki Y."/>
            <person name="Toyoda A."/>
            <person name="Wain H.M."/>
            <person name="Young S.K."/>
            <person name="Zeng Q."/>
            <person name="Zimmer A.R."/>
            <person name="Fujiyama A."/>
            <person name="Hattori M."/>
            <person name="Birren B.W."/>
            <person name="Sakaki Y."/>
            <person name="Lander E.S."/>
        </authorList>
    </citation>
    <scope>NUCLEOTIDE SEQUENCE [LARGE SCALE GENOMIC DNA]</scope>
</reference>
<reference key="6">
    <citation type="journal article" date="2004" name="Genome Res.">
        <title>The status, quality, and expansion of the NIH full-length cDNA project: the Mammalian Gene Collection (MGC).</title>
        <authorList>
            <consortium name="The MGC Project Team"/>
        </authorList>
    </citation>
    <scope>NUCLEOTIDE SEQUENCE [LARGE SCALE MRNA] (ISOFORM 1)</scope>
    <scope>VARIANTS GLY-151 AND ILE-642</scope>
    <source>
        <tissue>Placenta</tissue>
    </source>
</reference>
<reference key="7">
    <citation type="journal article" date="1999" name="Proc. Natl. Acad. Sci. U.S.A.">
        <title>Niemann-Pick C1 protein: obligatory roles for N-terminal domains and lysosomal targeting in cholesterol mobilization.</title>
        <authorList>
            <person name="Watari H."/>
            <person name="Blanchette-Mackie E.J."/>
            <person name="Dwyer N.K."/>
            <person name="Glick J.M."/>
            <person name="Patel S."/>
            <person name="Neufeld E.B."/>
            <person name="Brady R.O."/>
            <person name="Pentchev P.G."/>
            <person name="Strauss J.F. III"/>
        </authorList>
    </citation>
    <scope>FUNCTION</scope>
    <scope>SUBCELLULAR LOCATION</scope>
    <scope>DOMAIN</scope>
    <scope>MUTAGENESIS OF CYS-63; 74-CYS-CYS-75; CYS-97 AND 1275-LEU--PHE-1278</scope>
</reference>
<reference key="8">
    <citation type="journal article" date="2000" name="J. Biol. Chem.">
        <title>Topological analysis of Niemann-Pick C1 protein reveals that the membrane orientation of the putative sterol-sensing domain is identical to those of 3-hydroxy-3-methylglutaryl-CoA reductase and sterol regulatory element binding protein cleavage-activating protein.</title>
        <authorList>
            <person name="Davies J.P."/>
            <person name="Ioannou Y.A."/>
        </authorList>
    </citation>
    <scope>FUNCTION</scope>
    <scope>TOPOLOGY</scope>
    <scope>GLYCOSYLATION</scope>
</reference>
<reference key="9">
    <citation type="journal article" date="2007" name="Traffic">
        <title>Integral and associated lysosomal membrane proteins.</title>
        <authorList>
            <person name="Schroeder B."/>
            <person name="Wrocklage C."/>
            <person name="Pan C."/>
            <person name="Jaeger R."/>
            <person name="Koesters B."/>
            <person name="Schaefer H."/>
            <person name="Elsaesser H.-P."/>
            <person name="Mann M."/>
            <person name="Hasilik A."/>
        </authorList>
    </citation>
    <scope>SUBCELLULAR LOCATION [LARGE SCALE ANALYSIS]</scope>
    <source>
        <tissue>Placenta</tissue>
    </source>
</reference>
<reference key="10">
    <citation type="journal article" date="2008" name="Proc. Natl. Acad. Sci. U.S.A.">
        <title>NPC2 facilitates bidirectional transfer of cholesterol between NPC1 and lipid bilayers, a step in cholesterol egress from lysosomes.</title>
        <authorList>
            <person name="Infante R.E."/>
            <person name="Wang M.L."/>
            <person name="Radhakrishnan A."/>
            <person name="Kwon H.J."/>
            <person name="Brown M.S."/>
            <person name="Goldstein J.L."/>
        </authorList>
    </citation>
    <scope>FUNCTION</scope>
    <scope>INTERACTION WITH NPC2</scope>
    <scope>CATALYTIC ACTIVITY</scope>
</reference>
<reference key="11">
    <citation type="journal article" date="2009" name="Cell Metab.">
        <title>Identification of cholesterol-regulating genes by targeted RNAi screening.</title>
        <authorList>
            <person name="Bartz F."/>
            <person name="Kern L."/>
            <person name="Erz D."/>
            <person name="Zhu M."/>
            <person name="Gilbert D."/>
            <person name="Meinhof T."/>
            <person name="Wirkner U."/>
            <person name="Erfle H."/>
            <person name="Muckenthaler M."/>
            <person name="Pepperkok R."/>
            <person name="Runz H."/>
        </authorList>
    </citation>
    <scope>INTERACTION WITH TMEM97</scope>
</reference>
<reference key="12">
    <citation type="journal article" date="2009" name="J. Proteome Res.">
        <title>Glycoproteomics analysis of human liver tissue by combination of multiple enzyme digestion and hydrazide chemistry.</title>
        <authorList>
            <person name="Chen R."/>
            <person name="Jiang X."/>
            <person name="Sun D."/>
            <person name="Han G."/>
            <person name="Wang F."/>
            <person name="Ye M."/>
            <person name="Wang L."/>
            <person name="Zou H."/>
        </authorList>
    </citation>
    <scope>GLYCOSYLATION [LARGE SCALE ANALYSIS] AT ASN-135 AND ASN-524</scope>
    <source>
        <tissue>Liver</tissue>
    </source>
</reference>
<reference key="13">
    <citation type="journal article" date="2008" name="Proc. Natl. Acad. Sci. U.S.A.">
        <title>NPC1/NPC2 function as a tag team duo to mobilize cholesterol.</title>
        <authorList>
            <person name="Subramanian K."/>
            <person name="Balch W.E."/>
        </authorList>
    </citation>
    <scope>REVIEW ON FUNCTION</scope>
</reference>
<reference key="14">
    <citation type="journal article" date="2010" name="Cell Metab.">
        <title>Transfer of cholesterol by the NPC team.</title>
        <authorList>
            <person name="Vance J.E."/>
        </authorList>
    </citation>
    <scope>REVIEW ON FUNCTION</scope>
</reference>
<reference key="15">
    <citation type="journal article" date="2011" name="BMC Syst. Biol.">
        <title>Initial characterization of the human central proteome.</title>
        <authorList>
            <person name="Burkard T.R."/>
            <person name="Planyavsky M."/>
            <person name="Kaupe I."/>
            <person name="Breitwieser F.P."/>
            <person name="Buerckstuemmer T."/>
            <person name="Bennett K.L."/>
            <person name="Superti-Furga G."/>
            <person name="Colinge J."/>
        </authorList>
    </citation>
    <scope>IDENTIFICATION BY MASS SPECTROMETRY [LARGE SCALE ANALYSIS]</scope>
</reference>
<reference key="16">
    <citation type="journal article" date="2011" name="Curr. Opin. Lipidol.">
        <title>Function of the Niemann-Pick type C proteins and their bypass by cyclodextrin.</title>
        <authorList>
            <person name="Vance J.E."/>
            <person name="Peake K.B."/>
        </authorList>
    </citation>
    <scope>REVIEW ON FUNCTION</scope>
</reference>
<reference key="17">
    <citation type="journal article" date="2011" name="Nature">
        <title>Ebola virus entry requires the cholesterol transporter Niemann-Pick C1.</title>
        <authorList>
            <person name="Carette J.E."/>
            <person name="Raaben M."/>
            <person name="Wong A.C."/>
            <person name="Herbert A.S."/>
            <person name="Obernosterer G."/>
            <person name="Mulherkar N."/>
            <person name="Kuehne A.I."/>
            <person name="Kranzusch P.J."/>
            <person name="Griffin A.M."/>
            <person name="Ruthel G."/>
            <person name="Dal Cin P."/>
            <person name="Dye J.M."/>
            <person name="Whelan S.P."/>
            <person name="Chandran K."/>
            <person name="Brummelkamp T.R."/>
        </authorList>
    </citation>
    <scope>FUNCTION (MICROBIAL INFECTION)</scope>
    <scope>INTERACTION WITH EBOLAVIRUS GLYCOPROTEIN</scope>
</reference>
<reference key="18">
    <citation type="journal article" date="2015" name="J. Virol.">
        <title>Interaction between TIM-1 and NPC1 Is Important for Cellular Entry of Ebola Virus.</title>
        <authorList>
            <person name="Kuroda M."/>
            <person name="Fujikura D."/>
            <person name="Nanbo A."/>
            <person name="Marzi A."/>
            <person name="Noyori O."/>
            <person name="Kajihara M."/>
            <person name="Maruyama J."/>
            <person name="Matsuno K."/>
            <person name="Miyamoto H."/>
            <person name="Yoshida R."/>
            <person name="Feldmann H."/>
            <person name="Takada A."/>
        </authorList>
    </citation>
    <scope>INTERACTION WITH TIM1</scope>
    <scope>FUNCTION (MICROBIAL INFECTION)</scope>
</reference>
<reference key="19">
    <citation type="journal article" date="2015" name="Proteomics">
        <title>N-terminome analysis of the human mitochondrial proteome.</title>
        <authorList>
            <person name="Vaca Jacome A.S."/>
            <person name="Rabilloud T."/>
            <person name="Schaeffer-Reiss C."/>
            <person name="Rompais M."/>
            <person name="Ayoub D."/>
            <person name="Lane L."/>
            <person name="Bairoch A."/>
            <person name="Van Dorsselaer A."/>
            <person name="Carapito C."/>
        </authorList>
    </citation>
    <scope>IDENTIFICATION BY MASS SPECTROMETRY [LARGE SCALE ANALYSIS]</scope>
</reference>
<reference key="20">
    <citation type="journal article" date="2016" name="Hum. Mol. Genet.">
        <title>Reduction of TMEM97 increases NPC1 protein levels and restores cholesterol trafficking in Niemann-pick type C1 disease cells.</title>
        <authorList>
            <person name="Ebrahimi-Fakhari D."/>
            <person name="Wahlster L."/>
            <person name="Bartz F."/>
            <person name="Werenbeck-Ueding J."/>
            <person name="Praggastis M."/>
            <person name="Zhang J."/>
            <person name="Joggerst-Thomalla B."/>
            <person name="Theiss S."/>
            <person name="Grimm D."/>
            <person name="Ory D.S."/>
            <person name="Runz H."/>
        </authorList>
    </citation>
    <scope>FUNCTION</scope>
    <scope>SUBCELLULAR LOCATION</scope>
</reference>
<reference key="21">
    <citation type="journal article" date="2017" name="Science">
        <title>Lysosomal cholesterol activates mTORC1 via an SLC38A9-Niemann-Pick C1 signaling complex.</title>
        <authorList>
            <person name="Castellano B.M."/>
            <person name="Thelen A.M."/>
            <person name="Moldavski O."/>
            <person name="Feltes M."/>
            <person name="van der Welle R.E."/>
            <person name="Mydock-McGrane L."/>
            <person name="Jiang X."/>
            <person name="van Eijkeren R.J."/>
            <person name="Davis O.B."/>
            <person name="Louie S.M."/>
            <person name="Perera R.M."/>
            <person name="Covey D.F."/>
            <person name="Nomura D.K."/>
            <person name="Ory D.S."/>
            <person name="Zoncu R."/>
        </authorList>
    </citation>
    <scope>INTERACTION WITH SLC38A9</scope>
    <scope>FUNCTION</scope>
</reference>
<reference key="22">
    <citation type="journal article" date="2020" name="Science">
        <title>MHC class II transactivator CIITA induces cell resistance to Ebola virus and SARS-like coronaviruses.</title>
        <authorList>
            <person name="Bruchez A."/>
            <person name="Sha K."/>
            <person name="Johnson J."/>
            <person name="Chen L."/>
            <person name="Stefani C."/>
            <person name="McConnell H."/>
            <person name="Gaucherand L."/>
            <person name="Prins R."/>
            <person name="Matreyek K.A."/>
            <person name="Hume A.J."/>
            <person name="Muehlberger E."/>
            <person name="Schmidt E.V."/>
            <person name="Olinger G.G."/>
            <person name="Stuart L.M."/>
            <person name="Lacy-Hulbert A."/>
        </authorList>
    </citation>
    <scope>FUNCTION (MICROBIAL INFECTION)</scope>
</reference>
<reference key="23">
    <citation type="journal article" date="2021" name="Nat. Chem. Biol.">
        <title>A proteome-wide map of 20(S)-hydroxycholesterol interactors in cell membranes.</title>
        <authorList>
            <person name="Cheng Y.S."/>
            <person name="Zhang T."/>
            <person name="Ma X."/>
            <person name="Pratuangtham S."/>
            <person name="Zhang G.C."/>
            <person name="Ondrus A.A."/>
            <person name="Mafi A."/>
            <person name="Lomenick B."/>
            <person name="Jones J.J."/>
            <person name="Ondrus A.E."/>
        </authorList>
    </citation>
    <scope>INTERACTION WITH TMEM97</scope>
</reference>
<reference key="24">
    <citation type="journal article" date="2009" name="Cell">
        <title>Structure of N-terminal domain of NPC1 reveals distinct subdomains for binding and transfer of cholesterol.</title>
        <authorList>
            <person name="Kwon H.J."/>
            <person name="Abi-Mosleh L."/>
            <person name="Wang M.L."/>
            <person name="Deisenhofer J."/>
            <person name="Goldstein J.L."/>
            <person name="Brown M.S."/>
            <person name="Infante R.E."/>
        </authorList>
    </citation>
    <scope>X-RAY CRYSTALLOGRAPHY (1.60 ANGSTROMS) OF 23-252 OF MUTANT GLN-70; GLN-122 AND GLN-185 IN COMPLEX WITH CHOLESTEROL</scope>
    <scope>FUNCTION</scope>
    <scope>DISULFIDE BONDS</scope>
    <scope>GLYCOSYLATION AT ASN-158 AND ASN-222</scope>
    <scope>MUTAGENESIS OF 26-VAL-TRP-27; 39-ARG--ASN-41; ASN-41; ASN-70; 82-THR-LEU-83; 101-PHE-TYR-102; 106-ASN--PHE-108; 110-GLU--THR-112; ASN-122; 144-LEU-GLN-145; 146-TYR-TYR-147; 175-LEU-LEU-176; 180-ASP--ASP-182; ASN-185; 187-TYR-ASN-188; 191-GLU-TYR-192; 195-ASN-LYS-196; 197-ASP-ASN-198; 199-GLY-GLN-200; 202-PRO-PHE-203; 204-THR-ILE-205 AND GLY-660</scope>
</reference>
<reference evidence="52 53" key="25">
    <citation type="journal article" date="2016" name="Cell">
        <title>Ebola Viral Glycoprotein Bound to Its Endosomal Receptor Niemann-Pick C1.</title>
        <authorList>
            <person name="Wang H."/>
            <person name="Shi Y."/>
            <person name="Song J."/>
            <person name="Qi J."/>
            <person name="Lu G."/>
            <person name="Yan J."/>
            <person name="Gao G.F."/>
        </authorList>
    </citation>
    <scope>X-RAY CRYSTALLOGRAPHY (2.00 ANGSTROMS) OF 374-620 IN COMPLEX WITH EBOLAVIRUS GLYCOPROTEIN GP</scope>
    <scope>INTERACTION WITH EBOLAVIRUS GLYCOPROTEIN GP (MICROBIAL INFECTION)</scope>
    <scope>MUTAGENESIS OF 423-TYR-PRO-424; PHE-503; PHE-504 AND TYR-506</scope>
    <scope>DISULFIDE BONDS</scope>
</reference>
<reference evidence="51 55" key="26">
    <citation type="journal article" date="2016" name="Cell">
        <title>Structural Insights into the Niemann-Pick C1 (NPC1)-Mediated Cholesterol Transfer and Ebola Infection.</title>
        <authorList>
            <person name="Gong X."/>
            <person name="Qian H."/>
            <person name="Zhou X."/>
            <person name="Wu J."/>
            <person name="Wan T."/>
            <person name="Cao P."/>
            <person name="Huang W."/>
            <person name="Zhao X."/>
            <person name="Wang X."/>
            <person name="Wang P."/>
            <person name="Shi Y."/>
            <person name="Gao G.F."/>
            <person name="Zhou Q."/>
            <person name="Yan N."/>
        </authorList>
    </citation>
    <scope>STRUCTURE BY ELECTRON MICROSCOPY (4.43 ANGSTROMS)</scope>
    <scope>FUNCTION</scope>
    <scope>INTERACTION WITH NPC2 AND WITH EBOLAVIRUS GLYCOPROTEIN GP</scope>
    <scope>TOPOLOGY</scope>
    <scope>GLYCOSYLATION AT ASN-122; ASN-135; ASN-158; ASN-185; ASN-222; ASN-524; ASN-572; ASN-598 AND ASN-1064</scope>
    <scope>DISULFIDE BONDS</scope>
    <scope>CHARACTERIZATION OF VARIANT NPC1 TRP-518</scope>
    <scope>MUTAGENESIS OF 25-CYS--PRO-257; 175-LEU-LEU-176; 202-PRO-PHE-203 AND 249-PRO--PRO-257</scope>
</reference>
<reference evidence="54" key="27">
    <citation type="journal article" date="2016" name="FEBS Lett.">
        <title>Structure of glycosylated NPC1 luminal domain C reveals insights into NPC2 and Ebola virus interactions.</title>
        <authorList>
            <person name="Zhao Y."/>
            <person name="Ren J."/>
            <person name="Harlos K."/>
            <person name="Stuart D.I."/>
        </authorList>
    </citation>
    <scope>X-RAY CRYSTALLOGRAPHY (2.45 ANGSTROMS) OF 387-618</scope>
    <scope>GLYCOSYLATION AT ASN-478; ASN-524; ASN-557; ASN-572 AND ASN-598</scope>
    <scope>DISULFIDE BONDS</scope>
</reference>
<reference evidence="56" key="28">
    <citation type="journal article" date="2016" name="Proc. Natl. Acad. Sci. U.S.A.">
        <title>Clues to the mechanism of cholesterol transfer from the structure of NPC1 middle lumenal domain bound to NPC2.</title>
        <authorList>
            <person name="Li X."/>
            <person name="Saha P."/>
            <person name="Li J."/>
            <person name="Blobel G."/>
            <person name="Pfeffer S.R."/>
        </authorList>
    </citation>
    <scope>X-RAY CRYSTALLOGRAPHY (2.40 ANGSTROMS) OF 374-620 IN COMPLEX WITH NPC2</scope>
    <scope>DISULFIDE BONDS</scope>
</reference>
<reference evidence="57 58" key="29">
    <citation type="journal article" date="2017" name="Proc. Natl. Acad. Sci. U.S.A.">
        <title>3.3 A structure of Niemann-Pick C1 protein reveals insights into the function of the C-terminal luminal domain in cholesterol transport.</title>
        <authorList>
            <person name="Li X."/>
            <person name="Lu F."/>
            <person name="Trinh M.N."/>
            <person name="Schmiege P."/>
            <person name="Seemann J."/>
            <person name="Wang J."/>
            <person name="Blobel G."/>
        </authorList>
    </citation>
    <scope>X-RAY CRYSTALLOGRAPHY (3.33 ANGSTROMS) OF 334-1278</scope>
    <scope>FUNCTION</scope>
    <scope>TOPOLOGY</scope>
    <scope>GLYCOSYLATION AT ASN-452; ASN-459; ASN-478; ASN-524; ASN-557; ASN-598; ASN-916; ASN-931; ASN-961; ASN-968 AND ASN-1064</scope>
    <scope>MUTAGENESIS OF 230-SER--VAL-234; PRO-691 AND 909-CYS--ASP-917</scope>
    <scope>DISULFIDE BONDS</scope>
</reference>
<reference key="30">
    <citation type="journal article" date="1998" name="Am. J. Hum. Genet.">
        <title>The Nova Scotia (type D) form of Niemann-Pick disease is caused by a G3097--&gt;T transversion in NPC1.</title>
        <authorList>
            <person name="Greer W.L."/>
            <person name="Riddell D.C."/>
            <person name="Gillan T.L."/>
            <person name="Girouard G.S."/>
            <person name="Sparrow S.M."/>
            <person name="Byers D.M."/>
            <person name="Dobson M.J."/>
            <person name="Neumann P.E."/>
        </authorList>
    </citation>
    <scope>VARIANT NPC1 TRP-992</scope>
</reference>
<reference key="31">
    <citation type="journal article" date="1999" name="Am. J. Hum. Genet.">
        <title>Mutations in NPC1 highlight a conserved NPC1-specific cysteine-rich domain.</title>
        <authorList>
            <person name="Greer W.L."/>
            <person name="Dobson M.J."/>
            <person name="Girouard G.S."/>
            <person name="Byers D.M."/>
            <person name="Riddell D.C."/>
            <person name="Neumann P.E."/>
        </authorList>
    </citation>
    <scope>VARIANTS NPC1 GLN-934; LEU-940; ASN-948; LEU-954; TRP-992; ALA-1007; THR-1061 AND VAL-1213</scope>
</reference>
<reference key="32">
    <citation type="journal article" date="1999" name="Am. J. Hum. Genet.">
        <title>Niemann-Pick C1 disease: the I1061T substitution is a frequent mutant allele in patients of Western European descent and correlates with a classic juvenile phenotype.</title>
        <authorList>
            <person name="Millat G."/>
            <person name="Marcais C."/>
            <person name="Rafi M.A."/>
            <person name="Yamamoto T."/>
            <person name="Morris J.A."/>
            <person name="Pentchev P.G."/>
            <person name="Ohno K."/>
            <person name="Wenger D.A."/>
            <person name="Vanier M.T."/>
        </authorList>
    </citation>
    <scope>VARIANT NPC1 THR-1061</scope>
</reference>
<reference key="33">
    <citation type="journal article" date="1999" name="Hum. Genet.">
        <title>NPC1 gene mutations in Japanese patients with Niemann-Pick disease type C.</title>
        <authorList>
            <person name="Yamamoto T."/>
            <person name="Nanba E."/>
            <person name="Ninomiya H."/>
            <person name="Higaki K."/>
            <person name="Taniguchi M."/>
            <person name="Zhang H."/>
            <person name="Akaboshi S."/>
            <person name="Watanabe Y."/>
            <person name="Takeshima T."/>
            <person name="Inui K."/>
            <person name="Okada S."/>
            <person name="Tanaka A."/>
            <person name="Sakuragawa N."/>
            <person name="Millat G."/>
            <person name="Vanier M.T."/>
            <person name="Morris J.A."/>
            <person name="Pentchev P.G."/>
            <person name="Ohno K."/>
        </authorList>
    </citation>
    <scope>VARIANTS NPC1</scope>
    <scope>VARIANTS ARG-215; VAL-858 AND GLN-1266</scope>
</reference>
<reference key="34">
    <citation type="journal article" date="2000" name="J. Med. Genet.">
        <title>Genotype-phenotype relationship of Niemann-Pick disease type C: a possible correlation between clinical onset and levels of NPC1 protein in isolated skin fibroblasts.</title>
        <authorList>
            <person name="Yamamoto T."/>
            <person name="Ninomiya H."/>
            <person name="Matsumoto M."/>
            <person name="Ohta Y."/>
            <person name="Nanba E."/>
            <person name="Tsutsumi Y."/>
            <person name="Yamakawa K."/>
            <person name="Millat G."/>
            <person name="Vanier M.T."/>
            <person name="Pentchev P.G."/>
            <person name="Ohno K."/>
        </authorList>
    </citation>
    <scope>VARIANTS NPC1 GLY-177; PRO-473; PRO-510; GLN-518; SER-703; MET-889; LEU-954; TYR-956; ARG-996; THR-1061; CYS-1088; ARG-1205; PHE-1213 AND GLU-1236</scope>
    <scope>VARIANTS SER-237 AND ALA-873</scope>
</reference>
<reference key="35">
    <citation type="journal article" date="2001" name="Am. J. Hum. Genet.">
        <title>Niemann-Pick C variant detection by altered sphingolipid trafficking and correlation with mutations within a specific domain of NPC1.</title>
        <authorList>
            <person name="Sun X."/>
            <person name="Marks D.L."/>
            <person name="Park W.D."/>
            <person name="Wheatley C.L."/>
            <person name="Puri V."/>
            <person name="O'Brien J.F."/>
            <person name="Kraft D.L."/>
            <person name="Lundquist P.A."/>
            <person name="Patterson M.C."/>
            <person name="Pagano R.E."/>
            <person name="Snow K."/>
        </authorList>
    </citation>
    <scope>VARIANTS NPC1 ARG-92; MET-137; ASN-242; VAL-248; THR-401; GLN-404; ASP-612; TRP-652; CYS-789; CYS-825; VAL-874; SER-888; PRO-929; LEU-940; ASN-944; ASN-948; GLN-958; ARG-976; CYS-978; LEU-1004; ALA-1007; GLY-1023; THR-1061; LYS-1089; THR-1142; LYS-1150; SER-1156; MET-1165; HIS-1186 AND GLY-1189</scope>
    <scope>VARIANT SER-237</scope>
</reference>
<reference key="36">
    <citation type="journal article" date="2001" name="Am. J. Hum. Genet.">
        <title>Niemann-Pick C1 disease: correlations between NPC1 mutations, levels of NPC1 protein, and phenotypes emphasize the functional significance of the putative sterol-sensing domain and of the cysteine-rich luminal loop.</title>
        <authorList>
            <person name="Millat G."/>
            <person name="Marcais C."/>
            <person name="Tomasetto C."/>
            <person name="Chikh K."/>
            <person name="Fensom A.H."/>
            <person name="Harzer K."/>
            <person name="Wenger D.A."/>
            <person name="Ohno K."/>
            <person name="Vanier M.T."/>
        </authorList>
    </citation>
    <scope>VARIANTS NPC1 HIS-242; ARG-272; ALA-378; GLN-404; GLN-518; VAL-605; ARG-631; PRO-724; PRO-775; CYS-825; VAL-874; GLN-934; MET-943; ASN-944; MET-950; SER-986; ARG-992; ALA-1007; THR-1054; THR-1061; THR-1142; TYR-1168 AND HIS-1186</scope>
    <scope>VARIANT SER-237</scope>
</reference>
<reference key="37">
    <citation type="journal article" date="2001" name="Genet. Med.">
        <title>Clinical-biochemical correlation in molecularly characterized patients with Niemann-Pick type C.</title>
        <authorList>
            <person name="Meiner V."/>
            <person name="Shpitzen S."/>
            <person name="Mandel H."/>
            <person name="Klar A."/>
            <person name="Ben-Neriah Z."/>
            <person name="Zlotogora J."/>
            <person name="Sagi M."/>
            <person name="Lossos A."/>
            <person name="Bargal R."/>
            <person name="Sury V."/>
            <person name="Carmi R."/>
            <person name="Leitersdorf E."/>
            <person name="Zeigler M."/>
        </authorList>
    </citation>
    <scope>VARIANTS NPC1 ARG-63; GLN-404; VAL-927; TRP-992; ASP-1012 AND SER-1156</scope>
</reference>
<reference key="38">
    <citation type="journal article" date="2001" name="Hum. Genet.">
        <title>Niemann-Pick type C disease: NPC1 mutations associated with severe and mild cellular cholesterol trafficking alterations.</title>
        <authorList>
            <person name="Ribeiro I."/>
            <person name="Marcao A."/>
            <person name="Amaral O."/>
            <person name="Sa Miranda M.C."/>
            <person name="Vanier M.T."/>
            <person name="Millat G."/>
        </authorList>
    </citation>
    <scope>VARIANTS NPC1 ARG-92; TYR-177; TRP-518; CYS-942; CYS-978; ALA-1007; VAL-1035 AND THR-1061</scope>
    <scope>VARIANTS ARG-215; ILE-642 AND VAL-858</scope>
</reference>
<reference key="39">
    <citation type="journal article" date="2002" name="J. Inherit. Metab. Dis.">
        <title>Identification of novel mutations in the NPC1 gene in German patients with Niemann-Pick C disease.</title>
        <authorList>
            <person name="Kaminski W.E."/>
            <person name="Kluenemann H.H."/>
            <person name="Ibach B."/>
            <person name="Aslanidis C."/>
            <person name="Klein H.E."/>
            <person name="Schmitz G."/>
        </authorList>
    </citation>
    <scope>VARIANTS NPC1 GLY-231; VAL-874; ASN-948 AND THR-1094</scope>
    <scope>VARIANTS SER-237; CYS-381 AND ILE-642</scope>
</reference>
<reference key="40">
    <citation type="journal article" date="2002" name="J. Lipid Res.">
        <title>Niemann-Pick type C disease: mutations of NPC1 gene and evidence of abnormal expression of some mutant alleles in fibroblasts.</title>
        <authorList>
            <person name="Tarugi P."/>
            <person name="Ballarini G."/>
            <person name="Bembi B."/>
            <person name="Battisti C."/>
            <person name="Palmeri S."/>
            <person name="Panzani F."/>
            <person name="Di Leo E."/>
            <person name="Martini C."/>
            <person name="Federico A."/>
            <person name="Calandra S."/>
        </authorList>
    </citation>
    <scope>VARIANTS NPC1 LYS-451; LEU-474; CYS-890; ASP-899; SER-910; TRP-992; ALA-1007; THR-1061 AND SER-1156</scope>
    <scope>VARIANTS ARG-215; ILE-642 AND VAL-858</scope>
</reference>
<reference key="41">
    <citation type="journal article" date="2003" name="Hum. Mol. Genet.">
        <title>Defective endocytic trafficking of NPC1 and NPC2 underlying infantile Niemann-Pick type C disease.</title>
        <authorList>
            <person name="Blom T.S."/>
            <person name="Linder M.D."/>
            <person name="Snow K."/>
            <person name="Pihko H."/>
            <person name="Hess M.W."/>
            <person name="Jokitalo E."/>
            <person name="Veckman V."/>
            <person name="Syvaenen A.-C."/>
            <person name="Ikonen E."/>
        </authorList>
    </citation>
    <scope>FUNCTION</scope>
    <scope>SUBCELLULAR LOCATION</scope>
    <scope>VARIANT NPC1 ARG-113</scope>
    <scope>VARIANT SER-237</scope>
    <scope>CHARACTERIZATION OF VARIANT NPC1 ARG-113</scope>
    <scope>CHARACTERIZATION OF VARIANT SER-237</scope>
</reference>
<reference key="42">
    <citation type="journal article" date="2003" name="Hum. Mutat.">
        <title>Identification of 58 novel mutations in Niemann-Pick disease type C: correlation with biochemical phenotype and importance of PTC1-like domains in NPC1.</title>
        <authorList>
            <person name="Park W.D."/>
            <person name="O'Brien J.F."/>
            <person name="Lundquist P.A."/>
            <person name="Kraft D.L."/>
            <person name="Vockley C.W."/>
            <person name="Karnes P.S."/>
            <person name="Patterson M.C."/>
            <person name="Snow K."/>
        </authorList>
    </citation>
    <scope>VARIANTS NPC1 TYR-74; SER-166; SER-222; TYR-247; PHE-380; PRO-388; CYS-389; TRP-404; LEU-433; SER-509; SER-521; LEU-543; CYS-615; ARG-640; SER-660; MET-664; VAL-673; PHE-684; LEU-691; VAL-695; ASN-700; ILE-734; LYS-742; GLU-745; VAL-767; GLY-789; ASN-945; ARG-1016; GLN-1059; LEU-1087; ILE-1137; VAL-1140; LYS-1205 AND GLY-1249</scope>
    <scope>VARIANTS ARG-215; SER-237; SER-434 AND GLN-1266</scope>
</reference>
<reference key="43">
    <citation type="journal article" date="2005" name="Clin. Genet.">
        <title>Identification of 25 new mutations in 40 unrelated Spanish Niemann-Pick type C patients: genotype-phenotype correlations.</title>
        <authorList>
            <person name="Fernandez-Valero E.M."/>
            <person name="Ballart A."/>
            <person name="Iturriaga C."/>
            <person name="Lluch M."/>
            <person name="Macias J."/>
            <person name="Vanier M.T."/>
            <person name="Pineda M."/>
            <person name="Coll M.J."/>
        </authorList>
    </citation>
    <scope>VARIANTS NPC1 MET-137; TYR-177; TRP-372; LEU-434; LEU-474; TYR-479; ARG-576; MET-664; PHE-727; LYS-754; PRO-775; LEU-865; THR-926; CYS-942; ASN-944; HIS-948; GLU-959; 961-ASN--PHE-966 DELINS SER; ALA-1007; VAL-1035; LYS-1036; THR-1061; ASN-1066; ILE-1156; SER-1156 AND LEU-1224</scope>
    <scope>VARIANTS ARG-215; ILE-642; VAL-858 AND GLN-1266</scope>
</reference>
<reference key="44">
    <citation type="journal article" date="2005" name="J. Neurol. Neurosurg. Psych.">
        <title>Six novel NPC1 mutations in Chinese patients with Niemann-Pick disease type C.</title>
        <authorList>
            <person name="Yang C.-C."/>
            <person name="Su Y.-N."/>
            <person name="Chiou P.-C."/>
            <person name="Fietz M.J."/>
            <person name="Yu C.-L."/>
            <person name="Hwu W.-L."/>
            <person name="Lee M.-J."/>
        </authorList>
    </citation>
    <scope>VARIANTS NPC1 SER-968; VAL-1015; ARG-1034 AND LEU-1212</scope>
    <scope>VARIANTS ARG-215; ILE-642; VAL-858 AND GLN-1266</scope>
</reference>
<reference key="45">
    <citation type="journal article" date="2005" name="Mol. Genet. Metab.">
        <title>Niemann-Pick C disease: use of denaturing high performance liquid chromatography for the detection of NPC1 and NPC2 genetic variations and impact on management of patients and families.</title>
        <authorList>
            <person name="Millat G."/>
            <person name="Baielo N."/>
            <person name="Molinero S."/>
            <person name="Rodriguez C."/>
            <person name="Chikh K."/>
            <person name="Vanier M.T."/>
        </authorList>
    </citation>
    <scope>VARIANTS NPC1 SER-166; TYR-177; PRO-404; LEU-537; LEU-543; LEU-615; ARG-631; LEU-763; CYS-825; LEU-862; LEU-865; CYS-871; TYR-917; GLN-934; LEU-940; MET-950; SER-968; ALA-992; ARG-992; TRP-992; ALA-1007; MET-1036; THR-1061; VAL-1062; ASN-1097; VAL-1174; HIS-1186; VAL-1216 AND ARG-1240</scope>
    <scope>VARIANT MET-511</scope>
</reference>
<reference key="46">
    <citation type="journal article" date="2006" name="J. Inherit. Metab. Dis.">
        <title>Subclinical course of adult visceral Niemann-Pick type C1 disease. A rare or underdiagnosed disorder?</title>
        <authorList>
            <person name="Dvorakova L."/>
            <person name="Sikora J."/>
            <person name="Hrebicek M."/>
            <person name="Hulkova H."/>
            <person name="Bouckova M."/>
            <person name="Stolnaja L."/>
            <person name="Elleder M."/>
        </authorList>
    </citation>
    <scope>VARIANTS NPC1 ASN-666 AND SER-961</scope>
</reference>
<reference key="47">
    <citation type="journal article" date="2013" name="Am. J. Hum. Genet.">
        <title>Whole-exome sequencing identifies mutated c12orf57 in recessive corpus callosum hypoplasia.</title>
        <authorList>
            <person name="Akizu N."/>
            <person name="Shembesh N.M."/>
            <person name="Ben-Omran T."/>
            <person name="Bastaki L."/>
            <person name="Al-Tawari A."/>
            <person name="Zaki M.S."/>
            <person name="Koul R."/>
            <person name="Spencer E."/>
            <person name="Rosti R.O."/>
            <person name="Scott E."/>
            <person name="Nickerson E."/>
            <person name="Gabriel S."/>
            <person name="da Gente G."/>
            <person name="Li J."/>
            <person name="Deardorff M.A."/>
            <person name="Conlin L.K."/>
            <person name="Horton M.A."/>
            <person name="Zackai E.H."/>
            <person name="Sherr E.H."/>
            <person name="Gleeson J.G."/>
        </authorList>
    </citation>
    <scope>VARIANT NCP1 MET-137</scope>
</reference>
<evidence type="ECO:0000255" key="1"/>
<evidence type="ECO:0000255" key="2">
    <source>
        <dbReference type="PROSITE-ProRule" id="PRU00199"/>
    </source>
</evidence>
<evidence type="ECO:0000269" key="3">
    <source>
    </source>
</evidence>
<evidence type="ECO:0000269" key="4">
    <source>
    </source>
</evidence>
<evidence type="ECO:0000269" key="5">
    <source>
    </source>
</evidence>
<evidence type="ECO:0000269" key="6">
    <source>
    </source>
</evidence>
<evidence type="ECO:0000269" key="7">
    <source>
    </source>
</evidence>
<evidence type="ECO:0000269" key="8">
    <source>
    </source>
</evidence>
<evidence type="ECO:0000269" key="9">
    <source>
    </source>
</evidence>
<evidence type="ECO:0000269" key="10">
    <source>
    </source>
</evidence>
<evidence type="ECO:0000269" key="11">
    <source>
    </source>
</evidence>
<evidence type="ECO:0000269" key="12">
    <source>
    </source>
</evidence>
<evidence type="ECO:0000269" key="13">
    <source>
    </source>
</evidence>
<evidence type="ECO:0000269" key="14">
    <source>
    </source>
</evidence>
<evidence type="ECO:0000269" key="15">
    <source>
    </source>
</evidence>
<evidence type="ECO:0000269" key="16">
    <source>
    </source>
</evidence>
<evidence type="ECO:0000269" key="17">
    <source>
    </source>
</evidence>
<evidence type="ECO:0000269" key="18">
    <source>
    </source>
</evidence>
<evidence type="ECO:0000269" key="19">
    <source>
    </source>
</evidence>
<evidence type="ECO:0000269" key="20">
    <source>
    </source>
</evidence>
<evidence type="ECO:0000269" key="21">
    <source>
    </source>
</evidence>
<evidence type="ECO:0000269" key="22">
    <source>
    </source>
</evidence>
<evidence type="ECO:0000269" key="23">
    <source>
    </source>
</evidence>
<evidence type="ECO:0000269" key="24">
    <source>
    </source>
</evidence>
<evidence type="ECO:0000269" key="25">
    <source>
    </source>
</evidence>
<evidence type="ECO:0000269" key="26">
    <source>
    </source>
</evidence>
<evidence type="ECO:0000269" key="27">
    <source>
    </source>
</evidence>
<evidence type="ECO:0000269" key="28">
    <source>
    </source>
</evidence>
<evidence type="ECO:0000269" key="29">
    <source>
    </source>
</evidence>
<evidence type="ECO:0000269" key="30">
    <source>
    </source>
</evidence>
<evidence type="ECO:0000269" key="31">
    <source>
    </source>
</evidence>
<evidence type="ECO:0000269" key="32">
    <source>
    </source>
</evidence>
<evidence type="ECO:0000269" key="33">
    <source>
    </source>
</evidence>
<evidence type="ECO:0000269" key="34">
    <source>
    </source>
</evidence>
<evidence type="ECO:0000269" key="35">
    <source>
    </source>
</evidence>
<evidence type="ECO:0000269" key="36">
    <source>
    </source>
</evidence>
<evidence type="ECO:0000269" key="37">
    <source>
    </source>
</evidence>
<evidence type="ECO:0000269" key="38">
    <source>
    </source>
</evidence>
<evidence type="ECO:0000269" key="39">
    <source>
    </source>
</evidence>
<evidence type="ECO:0000269" key="40">
    <source>
    </source>
</evidence>
<evidence type="ECO:0000269" key="41">
    <source>
    </source>
</evidence>
<evidence type="ECO:0000303" key="42">
    <source>
    </source>
</evidence>
<evidence type="ECO:0000303" key="43">
    <source>
    </source>
</evidence>
<evidence type="ECO:0000305" key="44"/>
<evidence type="ECO:0000305" key="45">
    <source>
    </source>
</evidence>
<evidence type="ECO:0000305" key="46">
    <source>
    </source>
</evidence>
<evidence type="ECO:0000312" key="47">
    <source>
        <dbReference type="HGNC" id="HGNC:7897"/>
    </source>
</evidence>
<evidence type="ECO:0007744" key="48">
    <source>
        <dbReference type="PDB" id="3GKH"/>
    </source>
</evidence>
<evidence type="ECO:0007744" key="49">
    <source>
        <dbReference type="PDB" id="3GKI"/>
    </source>
</evidence>
<evidence type="ECO:0007744" key="50">
    <source>
        <dbReference type="PDB" id="3GKJ"/>
    </source>
</evidence>
<evidence type="ECO:0007744" key="51">
    <source>
        <dbReference type="PDB" id="3JD8"/>
    </source>
</evidence>
<evidence type="ECO:0007744" key="52">
    <source>
        <dbReference type="PDB" id="5F18"/>
    </source>
</evidence>
<evidence type="ECO:0007744" key="53">
    <source>
        <dbReference type="PDB" id="5F1B"/>
    </source>
</evidence>
<evidence type="ECO:0007744" key="54">
    <source>
        <dbReference type="PDB" id="5HNS"/>
    </source>
</evidence>
<evidence type="ECO:0007744" key="55">
    <source>
        <dbReference type="PDB" id="5JNX"/>
    </source>
</evidence>
<evidence type="ECO:0007744" key="56">
    <source>
        <dbReference type="PDB" id="5KWY"/>
    </source>
</evidence>
<evidence type="ECO:0007744" key="57">
    <source>
        <dbReference type="PDB" id="5U73"/>
    </source>
</evidence>
<evidence type="ECO:0007744" key="58">
    <source>
        <dbReference type="PDB" id="5U74"/>
    </source>
</evidence>
<evidence type="ECO:0007829" key="59">
    <source>
        <dbReference type="PDB" id="3GKJ"/>
    </source>
</evidence>
<evidence type="ECO:0007829" key="60">
    <source>
        <dbReference type="PDB" id="5F18"/>
    </source>
</evidence>
<evidence type="ECO:0007829" key="61">
    <source>
        <dbReference type="PDB" id="5KWY"/>
    </source>
</evidence>
<evidence type="ECO:0007829" key="62">
    <source>
        <dbReference type="PDB" id="5U74"/>
    </source>
</evidence>
<evidence type="ECO:0007829" key="63">
    <source>
        <dbReference type="PDB" id="6W5S"/>
    </source>
</evidence>
<evidence type="ECO:0007829" key="64">
    <source>
        <dbReference type="PDB" id="8EUS"/>
    </source>
</evidence>
<accession>O15118</accession>
<accession>B4DET3</accession>
<accession>Q9P130</accession>
<feature type="signal peptide" evidence="1">
    <location>
        <begin position="1"/>
        <end position="22"/>
    </location>
</feature>
<feature type="chain" id="PRO_0000023261" description="NPC intracellular cholesterol transporter 1">
    <location>
        <begin position="23"/>
        <end position="1278"/>
    </location>
</feature>
<feature type="topological domain" description="Lumenal" evidence="32">
    <location>
        <begin position="23"/>
        <end position="261"/>
    </location>
</feature>
<feature type="transmembrane region" description="Helical" evidence="32">
    <location>
        <begin position="262"/>
        <end position="282"/>
    </location>
</feature>
<feature type="topological domain" description="Cytoplasmic" evidence="32">
    <location>
        <begin position="283"/>
        <end position="350"/>
    </location>
</feature>
<feature type="transmembrane region" description="Helical" evidence="32 36">
    <location>
        <begin position="351"/>
        <end position="371"/>
    </location>
</feature>
<feature type="topological domain" description="Lumenal" evidence="32 36">
    <location>
        <begin position="372"/>
        <end position="620"/>
    </location>
</feature>
<feature type="transmembrane region" description="Helical" evidence="32 36">
    <location>
        <begin position="621"/>
        <end position="641"/>
    </location>
</feature>
<feature type="topological domain" description="Cytoplasmic" evidence="36">
    <location>
        <begin position="642"/>
        <end position="653"/>
    </location>
</feature>
<feature type="transmembrane region" description="Helical" evidence="36">
    <location>
        <begin position="654"/>
        <end position="675"/>
    </location>
</feature>
<feature type="topological domain" description="Lumenal" evidence="36">
    <location>
        <begin position="676"/>
        <end position="685"/>
    </location>
</feature>
<feature type="transmembrane region" description="Helical" evidence="36">
    <location>
        <begin position="686"/>
        <end position="706"/>
    </location>
</feature>
<feature type="topological domain" description="Cytoplasmic" evidence="36">
    <location>
        <begin position="707"/>
        <end position="730"/>
    </location>
</feature>
<feature type="transmembrane region" description="Helical" evidence="36">
    <location>
        <begin position="731"/>
        <end position="751"/>
    </location>
</feature>
<feature type="topological domain" description="Lumenal" evidence="36">
    <location>
        <begin position="752"/>
        <end position="759"/>
    </location>
</feature>
<feature type="transmembrane region" description="Helical" evidence="36">
    <location>
        <begin position="760"/>
        <end position="783"/>
    </location>
</feature>
<feature type="topological domain" description="Cytoplasmic" evidence="36">
    <location>
        <begin position="784"/>
        <end position="832"/>
    </location>
</feature>
<feature type="transmembrane region" description="Helical" evidence="36">
    <location>
        <begin position="833"/>
        <end position="853"/>
    </location>
</feature>
<feature type="topological domain" description="Lumenal" evidence="36">
    <location>
        <begin position="854"/>
        <end position="1097"/>
    </location>
</feature>
<feature type="transmembrane region" description="Helical" evidence="36">
    <location>
        <begin position="1098"/>
        <end position="1118"/>
    </location>
</feature>
<feature type="topological domain" description="Cytoplasmic" evidence="36">
    <location>
        <begin position="1119"/>
        <end position="1124"/>
    </location>
</feature>
<feature type="transmembrane region" description="Helical" evidence="36">
    <location>
        <begin position="1125"/>
        <end position="1145"/>
    </location>
</feature>
<feature type="topological domain" description="Lumenal" evidence="36">
    <location>
        <begin position="1146"/>
        <end position="1150"/>
    </location>
</feature>
<feature type="transmembrane region" description="Helical" evidence="36">
    <location>
        <begin position="1151"/>
        <end position="1171"/>
    </location>
</feature>
<feature type="topological domain" description="Cytoplasmic" evidence="36">
    <location>
        <begin position="1172"/>
        <end position="1194"/>
    </location>
</feature>
<feature type="transmembrane region" description="Helical" evidence="36">
    <location>
        <begin position="1195"/>
        <end position="1215"/>
    </location>
</feature>
<feature type="topological domain" description="Lumenal" evidence="36">
    <location>
        <begin position="1216"/>
        <end position="1223"/>
    </location>
</feature>
<feature type="transmembrane region" description="Helical" evidence="36">
    <location>
        <begin position="1224"/>
        <end position="1244"/>
    </location>
</feature>
<feature type="topological domain" description="Cytoplasmic" evidence="36">
    <location>
        <begin position="1245"/>
        <end position="1278"/>
    </location>
</feature>
<feature type="domain" description="SSD" evidence="2">
    <location>
        <begin position="620"/>
        <end position="785"/>
    </location>
</feature>
<feature type="region of interest" description="Important for cholesterol binding and cholesterol transfer from NPC1 to liposomes">
    <location>
        <begin position="175"/>
        <end position="205"/>
    </location>
</feature>
<feature type="region of interest" description="Required for location in lysosomes" evidence="41">
    <location>
        <begin position="1275"/>
        <end position="1278"/>
    </location>
</feature>
<feature type="short sequence motif" description="Di-leucine motif" evidence="44">
    <location>
        <begin position="1275"/>
        <end position="1278"/>
    </location>
</feature>
<feature type="binding site" evidence="25 46 49 50">
    <location>
        <position position="41"/>
    </location>
    <ligand>
        <name>cholesterol</name>
        <dbReference type="ChEBI" id="CHEBI:16113"/>
    </ligand>
</feature>
<feature type="binding site" evidence="25 46 49 50">
    <location>
        <position position="79"/>
    </location>
    <ligand>
        <name>cholesterol</name>
        <dbReference type="ChEBI" id="CHEBI:16113"/>
    </ligand>
</feature>
<feature type="site" description="Important for cholesterol binding" evidence="25">
    <location>
        <position position="108"/>
    </location>
</feature>
<feature type="glycosylation site" description="N-linked (GlcNAc...) asparagine" evidence="45">
    <location>
        <position position="70"/>
    </location>
</feature>
<feature type="glycosylation site" description="N-linked (GlcNAc...) asparagine" evidence="32 45 51">
    <location>
        <position position="122"/>
    </location>
</feature>
<feature type="glycosylation site" description="N-linked (GlcNAc...) asparagine" evidence="24 32 51">
    <location>
        <position position="135"/>
    </location>
</feature>
<feature type="glycosylation site" description="N-linked (GlcNAc...) asparagine; atypical" evidence="25 32 49 50 51">
    <location>
        <position position="158"/>
    </location>
</feature>
<feature type="glycosylation site" description="N-linked (GlcNAc...) asparagine" evidence="32 45 51">
    <location>
        <position position="185"/>
    </location>
</feature>
<feature type="glycosylation site" description="N-linked (GlcNAc...) asparagine" evidence="25 32 49 50 51">
    <location>
        <position position="222"/>
    </location>
</feature>
<feature type="glycosylation site" description="N-linked (GlcNAc...) asparagine" evidence="36 58">
    <location>
        <position position="452"/>
    </location>
</feature>
<feature type="glycosylation site" description="N-linked (GlcNAc...) asparagine" evidence="36 58">
    <location>
        <position position="459"/>
    </location>
</feature>
<feature type="glycosylation site" description="N-linked (GlcNAc...) asparagine" evidence="31 36 54 58">
    <location>
        <position position="478"/>
    </location>
</feature>
<feature type="glycosylation site" description="N-linked (GlcNAc...) asparagine" evidence="24 31 32 36 51 54 58">
    <location>
        <position position="524"/>
    </location>
</feature>
<feature type="glycosylation site" description="N-linked (GlcNAc...) asparagine" evidence="31 36 54 58">
    <location>
        <position position="557"/>
    </location>
</feature>
<feature type="glycosylation site" description="N-linked (GlcNAc...) asparagine" evidence="31 32 51 54">
    <location>
        <position position="572"/>
    </location>
</feature>
<feature type="glycosylation site" description="N-linked (GlcNAc...) asparagine" evidence="31 32 36 51 54 58">
    <location>
        <position position="598"/>
    </location>
</feature>
<feature type="glycosylation site" description="N-linked (GlcNAc...) asparagine" evidence="36 58">
    <location>
        <position position="916"/>
    </location>
</feature>
<feature type="glycosylation site" description="N-linked (GlcNAc...) asparagine" evidence="36 58">
    <location>
        <position position="931"/>
    </location>
</feature>
<feature type="glycosylation site" description="N-linked (GlcNAc...) asparagine" evidence="36 58">
    <location>
        <position position="961"/>
    </location>
</feature>
<feature type="glycosylation site" description="N-linked (GlcNAc...) asparagine" evidence="36 58">
    <location>
        <position position="968"/>
    </location>
</feature>
<feature type="glycosylation site" description="N-linked (GlcNAc...) asparagine" evidence="32 36 51 58">
    <location>
        <position position="1064"/>
    </location>
</feature>
<feature type="glycosylation site" description="N-linked (GlcNAc...) asparagine" evidence="1">
    <location>
        <position position="1072"/>
    </location>
</feature>
<feature type="disulfide bond" evidence="25 32 48 49 50 51 55">
    <location>
        <begin position="25"/>
        <end position="74"/>
    </location>
</feature>
<feature type="disulfide bond" evidence="25 32 48 49 50 51 55">
    <location>
        <begin position="31"/>
        <end position="42"/>
    </location>
</feature>
<feature type="disulfide bond" evidence="25 32 48 49 50 51 55">
    <location>
        <begin position="63"/>
        <end position="109"/>
    </location>
</feature>
<feature type="disulfide bond" evidence="25 32 48 49 50 51 55">
    <location>
        <begin position="75"/>
        <end position="113"/>
    </location>
</feature>
<feature type="disulfide bond" evidence="25 32 48 49 50 51 55">
    <location>
        <begin position="97"/>
        <end position="238"/>
    </location>
</feature>
<feature type="disulfide bond" evidence="25 32 48 49 50 51 55">
    <location>
        <begin position="100"/>
        <end position="160"/>
    </location>
</feature>
<feature type="disulfide bond" evidence="25 32 48 49 50 51 55">
    <location>
        <begin position="177"/>
        <end position="184"/>
    </location>
</feature>
<feature type="disulfide bond" evidence="25 32 48 49 50 51 55">
    <location>
        <begin position="227"/>
        <end position="243"/>
    </location>
</feature>
<feature type="disulfide bond" evidence="25 48 49 50">
    <location>
        <begin position="240"/>
        <end position="247"/>
    </location>
</feature>
<feature type="disulfide bond" evidence="30 31 32 36 51 52 53 54 55 56 57 58">
    <location>
        <begin position="468"/>
        <end position="479"/>
    </location>
</feature>
<feature type="disulfide bond" evidence="30 31 32 36 51 52 53 54 55 56 57 58">
    <location>
        <begin position="516"/>
        <end position="533"/>
    </location>
</feature>
<feature type="disulfide bond" evidence="36 57 58">
    <location>
        <begin position="909"/>
        <end position="914"/>
    </location>
</feature>
<feature type="disulfide bond" evidence="36 57 58">
    <location>
        <begin position="956"/>
        <end position="1011"/>
    </location>
</feature>
<feature type="disulfide bond" evidence="36 57 58">
    <location>
        <begin position="957"/>
        <end position="979"/>
    </location>
</feature>
<feature type="disulfide bond" evidence="36 57 58">
    <location>
        <begin position="967"/>
        <end position="976"/>
    </location>
</feature>
<feature type="splice variant" id="VSP_056431" description="In isoform 2." evidence="42">
    <location>
        <begin position="1"/>
        <end position="267"/>
    </location>
</feature>
<feature type="splice variant" id="VSP_056432" description="In isoform 2." evidence="42">
    <original>K</original>
    <variation>KGTAWLLTSTFPSSPVLP</variation>
    <location>
        <position position="318"/>
    </location>
</feature>
<feature type="splice variant" id="VSP_056433" description="In isoform 2." evidence="42">
    <location>
        <begin position="519"/>
        <end position="586"/>
    </location>
</feature>
<feature type="sequence variant" id="VAR_043172" description="In NPC1; dbSNP:rs747049347." evidence="11">
    <original>C</original>
    <variation>R</variation>
    <location>
        <position position="63"/>
    </location>
</feature>
<feature type="sequence variant" id="VAR_043173" description="In NPC1; dbSNP:rs2059213166." evidence="16">
    <original>C</original>
    <variation>Y</variation>
    <location>
        <position position="74"/>
    </location>
</feature>
<feature type="sequence variant" id="VAR_043174" description="In NPC1; dbSNP:rs2145544354." evidence="9 10">
    <original>Q</original>
    <variation>R</variation>
    <location>
        <position position="92"/>
    </location>
</feature>
<feature type="sequence variant" id="VAR_043175" description="In NPC1; partially mislocalized from late endocytic organelles diffusely to the cell periphery; localizes to the endoplasmic reticulum Rab7-negative endosomes and the cell surface; does not clear the lysosomal cholesterol accumulation in NPC1-deficient cells; dbSNP:rs120074136." evidence="15">
    <original>C</original>
    <variation>R</variation>
    <location>
        <position position="113"/>
    </location>
</feature>
<feature type="sequence variant" id="VAR_043176" description="In NPC1; dbSNP:rs372947142." evidence="9 19 28">
    <original>T</original>
    <variation>M</variation>
    <location>
        <position position="137"/>
    </location>
</feature>
<feature type="sequence variant" id="VAR_043177" description="In dbSNP:rs17855819." evidence="17">
    <original>S</original>
    <variation>G</variation>
    <location>
        <position position="151"/>
    </location>
</feature>
<feature type="sequence variant" id="VAR_043178" description="In NPC1; dbSNP:rs866966704." evidence="16 20">
    <original>P</original>
    <variation>S</variation>
    <location>
        <position position="166"/>
    </location>
</feature>
<feature type="sequence variant" id="VAR_008815" description="In NPC1; late infantile form." evidence="7">
    <original>C</original>
    <variation>G</variation>
    <location>
        <position position="177"/>
    </location>
</feature>
<feature type="sequence variant" id="VAR_015561" description="In NPC1; dbSNP:rs80358252." evidence="10 19 20">
    <original>C</original>
    <variation>Y</variation>
    <location>
        <position position="177"/>
    </location>
</feature>
<feature type="sequence variant" id="VAR_008816" description="In dbSNP:rs1805081." evidence="3 10 12 13 16 18 19">
    <original>H</original>
    <variation>R</variation>
    <location>
        <position position="215"/>
    </location>
</feature>
<feature type="sequence variant" id="VAR_043179" description="In NPC1; dbSNP:rs55680026." evidence="16">
    <original>N</original>
    <variation>S</variation>
    <location>
        <position position="222"/>
    </location>
</feature>
<feature type="sequence variant" id="VAR_043180" description="In NPC1." evidence="14">
    <original>V</original>
    <variation>G</variation>
    <location>
        <position position="231"/>
    </location>
</feature>
<feature type="sequence variant" id="VAR_008817" description="No effect on function; colocalizes with the wild-type protein with Rab7-positive late endosomes; clears the lysosomal cholesterol accumulation in NPC1-deficient cells; dbSNP:rs80358251." evidence="7 8 9 14 15 16">
    <original>P</original>
    <variation>S</variation>
    <location>
        <position position="237"/>
    </location>
</feature>
<feature type="sequence variant" id="VAR_043181" description="In NPC1." evidence="8">
    <original>D</original>
    <variation>H</variation>
    <location>
        <position position="242"/>
    </location>
</feature>
<feature type="sequence variant" id="VAR_043182" description="In NPC1." evidence="9">
    <original>D</original>
    <variation>N</variation>
    <location>
        <position position="242"/>
    </location>
</feature>
<feature type="sequence variant" id="VAR_043183" description="In NPC1." evidence="16">
    <original>C</original>
    <variation>Y</variation>
    <location>
        <position position="247"/>
    </location>
</feature>
<feature type="sequence variant" id="VAR_043184" description="In NPC1; dbSNP:rs1230538609." evidence="9">
    <original>G</original>
    <variation>V</variation>
    <location>
        <position position="248"/>
    </location>
</feature>
<feature type="sequence variant" id="VAR_043185" description="In NPC1." evidence="8">
    <original>M</original>
    <variation>R</variation>
    <location>
        <position position="272"/>
    </location>
</feature>
<feature type="sequence variant" id="VAR_008818" description="In dbSNP:rs2058955343.">
    <original>G</original>
    <variation>D</variation>
    <location>
        <position position="333"/>
    </location>
</feature>
<feature type="sequence variant" id="VAR_043187" description="In NPC1; dbSNP:rs1346436537." evidence="19">
    <original>R</original>
    <variation>W</variation>
    <location>
        <position position="372"/>
    </location>
</feature>
<feature type="sequence variant" id="VAR_015562" description="In NPC1; dbSNP:rs120074134." evidence="8">
    <original>V</original>
    <variation>A</variation>
    <location>
        <position position="378"/>
    </location>
</feature>
<feature type="sequence variant" id="VAR_043188" description="In NPC1; dbSNP:rs1435915496." evidence="16">
    <original>L</original>
    <variation>F</variation>
    <location>
        <position position="380"/>
    </location>
</feature>
<feature type="sequence variant" id="VAR_043189" evidence="14">
    <original>W</original>
    <variation>C</variation>
    <location>
        <position position="381"/>
    </location>
</feature>
<feature type="sequence variant" id="VAR_043190" description="In NPC1; dbSNP:rs1555637157." evidence="16">
    <original>A</original>
    <variation>P</variation>
    <location>
        <position position="388"/>
    </location>
</feature>
<feature type="sequence variant" id="VAR_043191" description="In NPC1; dbSNP:rs1053321823." evidence="16">
    <original>R</original>
    <variation>C</variation>
    <location>
        <position position="389"/>
    </location>
</feature>
<feature type="sequence variant" id="VAR_043192" description="In NPC1; dbSNP:rs766301620." evidence="9">
    <original>P</original>
    <variation>T</variation>
    <location>
        <position position="401"/>
    </location>
</feature>
<feature type="sequence variant" id="VAR_043193" description="In NPC1." evidence="20">
    <original>R</original>
    <variation>P</variation>
    <location>
        <position position="404"/>
    </location>
</feature>
<feature type="sequence variant" id="VAR_043194" description="In NPC1; dbSNP:rs139751448." evidence="8 9 11">
    <original>R</original>
    <variation>Q</variation>
    <location>
        <position position="404"/>
    </location>
</feature>
<feature type="sequence variant" id="VAR_043195" description="In NPC1; dbSNP:rs1298238512." evidence="16">
    <original>R</original>
    <variation>W</variation>
    <location>
        <position position="404"/>
    </location>
</feature>
<feature type="sequence variant" id="VAR_043196" description="In NPC1; dbSNP:rs1064793791." evidence="16">
    <original>P</original>
    <variation>L</variation>
    <location>
        <position position="433"/>
    </location>
</feature>
<feature type="sequence variant" id="VAR_043197" description="In NPC1; dbSNP:rs774333145." evidence="19">
    <original>P</original>
    <variation>L</variation>
    <location>
        <position position="434"/>
    </location>
</feature>
<feature type="sequence variant" id="VAR_043198" description="In dbSNP:rs61731962." evidence="16">
    <original>P</original>
    <variation>S</variation>
    <location>
        <position position="434"/>
    </location>
</feature>
<feature type="sequence variant" id="VAR_043199" description="In NPC1; dbSNP:rs781065429." evidence="13">
    <original>E</original>
    <variation>K</variation>
    <location>
        <position position="451"/>
    </location>
</feature>
<feature type="sequence variant" id="VAR_008819" description="In dbSNP:rs2145447843.">
    <original>L</original>
    <variation>P</variation>
    <location>
        <position position="472"/>
    </location>
</feature>
<feature type="sequence variant" id="VAR_008820" description="In NPC1; late infantile form." evidence="7">
    <original>S</original>
    <variation>P</variation>
    <location>
        <position position="473"/>
    </location>
</feature>
<feature type="sequence variant" id="VAR_043200" description="In NPC1; dbSNP:rs372445155." evidence="13 19">
    <original>P</original>
    <variation>L</variation>
    <location>
        <position position="474"/>
    </location>
</feature>
<feature type="sequence variant" id="VAR_043201" description="In NPC1; dbSNP:rs1555636659." evidence="19">
    <original>C</original>
    <variation>Y</variation>
    <location>
        <position position="479"/>
    </location>
</feature>
<feature type="sequence variant" id="VAR_043202" description="In NPC1; dbSNP:rs1190383931." evidence="16">
    <original>Y</original>
    <variation>S</variation>
    <location>
        <position position="509"/>
    </location>
</feature>
<feature type="sequence variant" id="VAR_008821" description="In NPC1; late infantile form." evidence="7">
    <original>H</original>
    <variation>P</variation>
    <location>
        <position position="510"/>
    </location>
</feature>
<feature type="sequence variant" id="VAR_043203" description="In dbSNP:rs13381670." evidence="20">
    <original>T</original>
    <variation>M</variation>
    <location>
        <position position="511"/>
    </location>
</feature>
<feature type="sequence variant" id="VAR_043204" description="In NPC1; dbSNP:rs1567963883." evidence="12">
    <original>H</original>
    <variation>R</variation>
    <location>
        <position position="512"/>
    </location>
</feature>
<feature type="sequence variant" id="VAR_008822" description="In NPC1; late infantile form; Common in Japanese; dbSNP:rs483352886." evidence="7 8">
    <original>R</original>
    <variation>Q</variation>
    <location>
        <position position="518"/>
    </location>
</feature>
<feature type="sequence variant" id="VAR_043205" description="In NPC1; decreased affinity for NPC2; decreased cholesterol transfer from NPC2 to NPC1; dbSNP:rs377515417." evidence="10 32">
    <original>R</original>
    <variation>W</variation>
    <location>
        <position position="518"/>
    </location>
</feature>
<feature type="sequence variant" id="VAR_043206" description="In NPC1; dbSNP:rs138184115." evidence="16">
    <original>A</original>
    <variation>S</variation>
    <location>
        <position position="521"/>
    </location>
</feature>
<feature type="sequence variant" id="VAR_043207" description="In NPC1." evidence="20">
    <original>F</original>
    <variation>L</variation>
    <location>
        <position position="537"/>
    </location>
</feature>
<feature type="sequence variant" id="VAR_043208" description="In NPC1; dbSNP:rs369368181." evidence="16 20">
    <original>P</original>
    <variation>L</variation>
    <location>
        <position position="543"/>
    </location>
</feature>
<feature type="sequence variant" id="VAR_043209" description="In NPC1.">
    <original>T</original>
    <variation>K</variation>
    <location>
        <position position="574"/>
    </location>
</feature>
<feature type="sequence variant" id="VAR_043210" description="In NPC1; dbSNP:rs761660695." evidence="19">
    <original>K</original>
    <variation>R</variation>
    <location>
        <position position="576"/>
    </location>
</feature>
<feature type="sequence variant" id="VAR_043211" description="In NPC1." evidence="8">
    <original>A</original>
    <variation>V</variation>
    <location>
        <position position="605"/>
    </location>
</feature>
<feature type="sequence variant" id="VAR_043212" description="In NPC1; dbSNP:rs1555634739." evidence="9">
    <original>E</original>
    <variation>D</variation>
    <location>
        <position position="612"/>
    </location>
</feature>
<feature type="sequence variant" id="VAR_043213" description="In NPC1; dbSNP:rs745777805." evidence="16">
    <original>R</original>
    <variation>C</variation>
    <location>
        <position position="615"/>
    </location>
</feature>
<feature type="sequence variant" id="VAR_043214" description="In NPC1; dbSNP:rs773351341." evidence="20">
    <original>R</original>
    <variation>L</variation>
    <location>
        <position position="615"/>
    </location>
</feature>
<feature type="sequence variant" id="VAR_043215" description="In NPC1." evidence="8 20">
    <original>M</original>
    <variation>R</variation>
    <location>
        <position position="631"/>
    </location>
</feature>
<feature type="sequence variant" id="VAR_043216" description="In NPC1; dbSNP:rs2058768195." evidence="16">
    <original>G</original>
    <variation>R</variation>
    <location>
        <position position="640"/>
    </location>
</feature>
<feature type="sequence variant" id="VAR_008823" description="In dbSNP:rs1788799." evidence="10 12 13 14 17 18 19 39">
    <original>M</original>
    <variation>I</variation>
    <location>
        <position position="642"/>
    </location>
</feature>
<feature type="sequence variant" id="VAR_043217" description="In NPC1; dbSNP:rs765652543." evidence="9">
    <original>S</original>
    <variation>W</variation>
    <location>
        <position position="652"/>
    </location>
</feature>
<feature type="sequence variant" id="VAR_043218" description="In NPC1; dbSNP:rs1555634490." evidence="16">
    <original>G</original>
    <variation>S</variation>
    <location>
        <position position="660"/>
    </location>
</feature>
<feature type="sequence variant" id="VAR_043219" description="In NPC1; dbSNP:rs376213990." evidence="16 19">
    <original>V</original>
    <variation>M</variation>
    <location>
        <position position="664"/>
    </location>
</feature>
<feature type="sequence variant" id="VAR_043220" description="In NPC1; dbSNP:rs750480579." evidence="21">
    <original>S</original>
    <variation>N</variation>
    <location>
        <position position="666"/>
    </location>
</feature>
<feature type="sequence variant" id="VAR_043221" description="In NPC1." evidence="12">
    <original>C</original>
    <variation>W</variation>
    <location>
        <position position="670"/>
    </location>
</feature>
<feature type="sequence variant" id="VAR_043222" description="In NPC1; dbSNP:rs1555634452." evidence="16">
    <original>G</original>
    <variation>V</variation>
    <location>
        <position position="673"/>
    </location>
</feature>
<feature type="sequence variant" id="VAR_043223" description="In NPC1; dbSNP:rs1057518942." evidence="16">
    <original>L</original>
    <variation>F</variation>
    <location>
        <position position="684"/>
    </location>
</feature>
<feature type="sequence variant" id="VAR_043224" description="In NPC1; dbSNP:rs1555634422." evidence="16">
    <original>P</original>
    <variation>L</variation>
    <location>
        <position position="691"/>
    </location>
</feature>
<feature type="sequence variant" id="VAR_043225" description="In NPC1; dbSNP:rs370323921." evidence="16">
    <original>L</original>
    <variation>V</variation>
    <location>
        <position position="695"/>
    </location>
</feature>
<feature type="sequence variant" id="VAR_043226" description="In NPC1." evidence="16">
    <original>D</original>
    <variation>N</variation>
    <location>
        <position position="700"/>
    </location>
</feature>
<feature type="sequence variant" id="VAR_043227" description="In NPC1; dbSNP:rs2058753693." evidence="7">
    <original>F</original>
    <variation>S</variation>
    <location>
        <position position="703"/>
    </location>
</feature>
<feature type="sequence variant" id="VAR_043228" description="In NPC1; dbSNP:rs1393388896." evidence="8">
    <original>L</original>
    <variation>P</variation>
    <location>
        <position position="724"/>
    </location>
</feature>
<feature type="sequence variant" id="VAR_043229" description="In NPC1." evidence="19">
    <original>V</original>
    <variation>F</variation>
    <location>
        <position position="727"/>
    </location>
</feature>
<feature type="sequence variant" id="VAR_043230" description="In NPC1; dbSNP:rs757475924." evidence="16">
    <original>S</original>
    <variation>I</variation>
    <location>
        <position position="734"/>
    </location>
</feature>
<feature type="sequence variant" id="VAR_043231" description="In NPC1; dbSNP:rs1555634202." evidence="16">
    <original>E</original>
    <variation>K</variation>
    <location>
        <position position="742"/>
    </location>
</feature>
<feature type="sequence variant" id="VAR_043232" description="In NPC1; dbSNP:rs752386083." evidence="16">
    <original>A</original>
    <variation>E</variation>
    <location>
        <position position="745"/>
    </location>
</feature>
<feature type="sequence variant" id="VAR_043233" description="In NPC1." evidence="19">
    <original>M</original>
    <variation>K</variation>
    <location>
        <position position="754"/>
    </location>
</feature>
<feature type="sequence variant" id="VAR_008824">
    <original>V</original>
    <variation>A</variation>
    <location>
        <position position="757"/>
    </location>
</feature>
<feature type="sequence variant" id="VAR_043234" description="In NPC1." evidence="20">
    <original>F</original>
    <variation>L</variation>
    <location>
        <position position="763"/>
    </location>
</feature>
<feature type="sequence variant" id="VAR_043235" description="In NPC1." evidence="16">
    <original>A</original>
    <variation>V</variation>
    <location>
        <position position="767"/>
    </location>
</feature>
<feature type="sequence variant" id="VAR_043236" description="In NPC1; dbSNP:rs80358253." evidence="8 19">
    <original>Q</original>
    <variation>P</variation>
    <location>
        <position position="775"/>
    </location>
</feature>
<feature type="sequence variant" id="VAR_043237" description="In NPC1; dbSNP:rs1555633697." evidence="9">
    <original>R</original>
    <variation>C</variation>
    <location>
        <position position="789"/>
    </location>
</feature>
<feature type="sequence variant" id="VAR_043238" description="In NPC1; dbSNP:rs1555633697." evidence="16">
    <original>R</original>
    <variation>G</variation>
    <location>
        <position position="789"/>
    </location>
</feature>
<feature type="sequence variant" id="VAR_043239" description="In NPC1; dbSNP:rs550562774." evidence="8 9 12 20">
    <original>Y</original>
    <variation>C</variation>
    <location>
        <position position="825"/>
    </location>
</feature>
<feature type="sequence variant" id="VAR_043240" description="In NPC1; dbSNP:rs1057519242." evidence="12">
    <original>S</original>
    <variation>I</variation>
    <location>
        <position position="849"/>
    </location>
</feature>
<feature type="sequence variant" id="VAR_008825" description="In dbSNP:rs1805082." evidence="3 10 12 13 18 19">
    <original>I</original>
    <variation>V</variation>
    <location>
        <position position="858"/>
    </location>
</feature>
<feature type="sequence variant" id="VAR_043241" description="In NPC1." evidence="20">
    <original>Q</original>
    <variation>L</variation>
    <location>
        <position position="862"/>
    </location>
</feature>
<feature type="sequence variant" id="VAR_043242" description="In NPC1; dbSNP:rs1160114136." evidence="19 20">
    <original>S</original>
    <variation>L</variation>
    <location>
        <position position="865"/>
    </location>
</feature>
<feature type="sequence variant" id="VAR_043243" description="In NPC1; dbSNP:rs2058690136." evidence="20">
    <original>Y</original>
    <variation>C</variation>
    <location>
        <position position="871"/>
    </location>
</feature>
<feature type="sequence variant" id="VAR_043244" evidence="7">
    <original>V</original>
    <variation>A</variation>
    <location>
        <position position="873"/>
    </location>
</feature>
<feature type="sequence variant" id="VAR_043245" description="In NPC1; dbSNP:rs372030650." evidence="8 9 12 14">
    <original>D</original>
    <variation>V</variation>
    <location>
        <position position="874"/>
    </location>
</feature>
<feature type="sequence variant" id="VAR_043246" description="In NPC1; dbSNP:rs1191346899." evidence="9">
    <original>P</original>
    <variation>S</variation>
    <location>
        <position position="888"/>
    </location>
</feature>
<feature type="sequence variant" id="VAR_008826" description="In NPC1; adult form; dbSNP:rs120074130." evidence="7">
    <original>V</original>
    <variation>M</variation>
    <location>
        <position position="889"/>
    </location>
</feature>
<feature type="sequence variant" id="VAR_043247" description="In NPC1." evidence="13">
    <original>Y</original>
    <variation>C</variation>
    <location>
        <position position="890"/>
    </location>
</feature>
<feature type="sequence variant" id="VAR_043248" description="In NPC1." evidence="13">
    <original>Y</original>
    <variation>D</variation>
    <location>
        <position position="899"/>
    </location>
</feature>
<feature type="sequence variant" id="VAR_043249" description="In NPC1; dbSNP:rs768999208." evidence="13">
    <original>G</original>
    <variation>S</variation>
    <location>
        <position position="910"/>
    </location>
</feature>
<feature type="sequence variant" id="VAR_043250" description="In NPC1." evidence="20">
    <original>D</original>
    <variation>Y</variation>
    <location>
        <position position="917"/>
    </location>
</feature>
<feature type="sequence variant" id="VAR_043251" description="In NPC1; dbSNP:rs564631426." evidence="19">
    <original>A</original>
    <variation>T</variation>
    <location>
        <position position="926"/>
    </location>
</feature>
<feature type="sequence variant" id="VAR_043252" description="In NPC1; dbSNP:rs753768576." evidence="11">
    <original>A</original>
    <variation>V</variation>
    <location>
        <position position="927"/>
    </location>
</feature>
<feature type="sequence variant" id="VAR_008827" description="In NPC1; dbSNP:rs28940897." evidence="39">
    <original>Q</original>
    <variation>P</variation>
    <location>
        <position position="928"/>
    </location>
</feature>
<feature type="sequence variant" id="VAR_043253" description="In NPC1." evidence="9">
    <original>L</original>
    <variation>P</variation>
    <location>
        <position position="929"/>
    </location>
</feature>
<feature type="sequence variant" id="VAR_008828" description="In NPC1; dbSNP:rs786204714." evidence="4 8 20">
    <original>R</original>
    <variation>Q</variation>
    <location>
        <position position="934"/>
    </location>
</feature>
<feature type="sequence variant" id="VAR_008829" description="In NPC1; dbSNP:rs143124972." evidence="4 9 20">
    <original>S</original>
    <variation>L</variation>
    <location>
        <position position="940"/>
    </location>
</feature>
<feature type="sequence variant" id="VAR_043254" description="In NPC1." evidence="10 19">
    <original>W</original>
    <variation>C</variation>
    <location>
        <position position="942"/>
    </location>
</feature>
<feature type="sequence variant" id="VAR_043255" description="In NPC1." evidence="8">
    <original>I</original>
    <variation>M</variation>
    <location>
        <position position="943"/>
    </location>
</feature>
<feature type="sequence variant" id="VAR_043256" description="In NPC1; dbSNP:rs748837410." evidence="8 9 19">
    <original>D</original>
    <variation>N</variation>
    <location>
        <position position="944"/>
    </location>
</feature>
<feature type="sequence variant" id="VAR_043257" description="In NPC1; dbSNP:rs1428599096." evidence="16">
    <original>D</original>
    <variation>N</variation>
    <location>
        <position position="945"/>
    </location>
</feature>
<feature type="sequence variant" id="VAR_043258" description="In NPC1." evidence="19">
    <original>D</original>
    <variation>H</variation>
    <location>
        <position position="948"/>
    </location>
</feature>
<feature type="sequence variant" id="VAR_008830" description="In NPC1; dbSNP:rs1261939149." evidence="4 9 14">
    <original>D</original>
    <variation>N</variation>
    <location>
        <position position="948"/>
    </location>
</feature>
<feature type="sequence variant" id="VAR_043259" description="In NPC1." evidence="12">
    <original>D</original>
    <variation>Y</variation>
    <location>
        <position position="948"/>
    </location>
</feature>
<feature type="sequence variant" id="VAR_015563" description="In NPC1; adult form; dbSNP:rs120074135." evidence="8 20">
    <original>V</original>
    <variation>M</variation>
    <location>
        <position position="950"/>
    </location>
</feature>
<feature type="sequence variant" id="VAR_008831" description="In NPC1; dbSNP:rs543206298." evidence="4 7 12">
    <original>S</original>
    <variation>L</variation>
    <location>
        <position position="954"/>
    </location>
</feature>
<feature type="sequence variant" id="VAR_008832" description="In NPC1; late infantile form; dbSNP:rs2058679596." evidence="7">
    <original>C</original>
    <variation>Y</variation>
    <location>
        <position position="956"/>
    </location>
</feature>
<feature type="sequence variant" id="VAR_043260" description="In NPC1; dbSNP:rs120074132." evidence="12">
    <original>R</original>
    <variation>L</variation>
    <location>
        <position position="958"/>
    </location>
</feature>
<feature type="sequence variant" id="VAR_015564" description="In NPC1; dbSNP:rs120074132." evidence="9">
    <original>R</original>
    <variation>Q</variation>
    <location>
        <position position="958"/>
    </location>
</feature>
<feature type="sequence variant" id="VAR_043261" description="In NPC1." evidence="19">
    <original>V</original>
    <variation>E</variation>
    <location>
        <position position="959"/>
    </location>
</feature>
<feature type="sequence variant" id="VAR_043262" description="In NPC1." evidence="19">
    <original>NITDQF</original>
    <variation>S</variation>
    <location>
        <begin position="961"/>
        <end position="966"/>
    </location>
</feature>
<feature type="sequence variant" id="VAR_043263" description="In NPC1; dbSNP:rs34084984." evidence="21">
    <original>N</original>
    <variation>S</variation>
    <location>
        <position position="961"/>
    </location>
</feature>
<feature type="sequence variant" id="VAR_043264" description="In NPC1; dbSNP:rs773767253." evidence="18 20">
    <original>N</original>
    <variation>S</variation>
    <location>
        <position position="968"/>
    </location>
</feature>
<feature type="sequence variant" id="VAR_043265" evidence="12">
    <original>V</original>
    <variation>G</variation>
    <location>
        <position position="971"/>
    </location>
</feature>
<feature type="sequence variant" id="VAR_043266" description="In NPC1." evidence="9">
    <original>C</original>
    <variation>R</variation>
    <location>
        <position position="976"/>
    </location>
</feature>
<feature type="sequence variant" id="VAR_015565" description="In NPC1; dbSNP:rs28942108." evidence="9 10">
    <original>R</original>
    <variation>C</variation>
    <location>
        <position position="978"/>
    </location>
</feature>
<feature type="sequence variant" id="VAR_043267" description="In NPC1; dbSNP:rs1364834942." evidence="8">
    <original>G</original>
    <variation>S</variation>
    <location>
        <position position="986"/>
    </location>
</feature>
<feature type="sequence variant" id="VAR_043268" description="In NPC1; dbSNP:rs757534240." evidence="20">
    <original>G</original>
    <variation>A</variation>
    <location>
        <position position="992"/>
    </location>
</feature>
<feature type="sequence variant" id="VAR_015566" description="In NPC1; dbSNP:rs80358254." evidence="8 20">
    <original>G</original>
    <variation>R</variation>
    <location>
        <position position="992"/>
    </location>
</feature>
<feature type="sequence variant" id="VAR_008833" description="In NPC1; found in the Nova Scotian clinical variant; dbSNP:rs80358254." evidence="4 11 13 20 40">
    <original>G</original>
    <variation>W</variation>
    <location>
        <position position="992"/>
    </location>
</feature>
<feature type="sequence variant" id="VAR_043269" description="In NPC1; dbSNP:rs1555632958." evidence="7">
    <original>M</original>
    <variation>R</variation>
    <location>
        <position position="996"/>
    </location>
</feature>
<feature type="sequence variant" id="VAR_043270" description="In NPC1; dbSNP:rs150334966." evidence="9">
    <original>S</original>
    <variation>L</variation>
    <location>
        <position position="1004"/>
    </location>
</feature>
<feature type="sequence variant" id="VAR_008834" description="In NPC1; dbSNP:rs80358257." evidence="4 8 9 10 12 13 19 20">
    <original>P</original>
    <variation>A</variation>
    <location>
        <position position="1007"/>
    </location>
</feature>
<feature type="sequence variant" id="VAR_043271" description="In NPC1." evidence="11">
    <original>G</original>
    <variation>D</variation>
    <location>
        <position position="1012"/>
    </location>
</feature>
<feature type="sequence variant" id="VAR_043272" description="In NPC1; dbSNP:rs761773567." evidence="18">
    <original>G</original>
    <variation>V</variation>
    <location>
        <position position="1015"/>
    </location>
</feature>
<feature type="sequence variant" id="VAR_043273" description="In NPC1; dbSNP:rs140211089." evidence="16">
    <original>H</original>
    <variation>R</variation>
    <location>
        <position position="1016"/>
    </location>
</feature>
<feature type="sequence variant" id="VAR_043274" description="In NPC1; dbSNP:rs2145357984." evidence="9">
    <original>V</original>
    <variation>G</variation>
    <location>
        <position position="1023"/>
    </location>
</feature>
<feature type="sequence variant" id="VAR_043275" description="In NPC1; dbSNP:rs2058637844." evidence="18">
    <original>G</original>
    <variation>R</variation>
    <location>
        <position position="1034"/>
    </location>
</feature>
<feature type="sequence variant" id="VAR_015567" description="In NPC1; dbSNP:rs28942107." evidence="10 19">
    <original>A</original>
    <variation>V</variation>
    <location>
        <position position="1035"/>
    </location>
</feature>
<feature type="sequence variant" id="VAR_043276" description="In NPC1." evidence="19">
    <original>T</original>
    <variation>K</variation>
    <location>
        <position position="1036"/>
    </location>
</feature>
<feature type="sequence variant" id="VAR_008835" description="In NPC1; dbSNP:rs28942104." evidence="20">
    <original>T</original>
    <variation>M</variation>
    <location>
        <position position="1036"/>
    </location>
</feature>
<feature type="sequence variant" id="VAR_043277" description="In dbSNP:rs2058637067." evidence="12">
    <original>A</original>
    <variation>V</variation>
    <location>
        <position position="1049"/>
    </location>
</feature>
<feature type="sequence variant" id="VAR_043278" description="In NPC1; dbSNP:rs80358258." evidence="8">
    <original>A</original>
    <variation>T</variation>
    <location>
        <position position="1054"/>
    </location>
</feature>
<feature type="sequence variant" id="VAR_043279" description="In NPC1; dbSNP:rs771000314." evidence="16">
    <original>R</original>
    <variation>Q</variation>
    <location>
        <position position="1059"/>
    </location>
</feature>
<feature type="sequence variant" id="VAR_008836" description="In NPC1; late infantile form; dbSNP:rs80358259." evidence="4 5 7 8 9 10 12 13 19 20">
    <original>I</original>
    <variation>T</variation>
    <location>
        <position position="1061"/>
    </location>
</feature>
<feature type="sequence variant" id="VAR_043280" description="In NPC1." evidence="20">
    <original>A</original>
    <variation>V</variation>
    <location>
        <position position="1062"/>
    </location>
</feature>
<feature type="sequence variant" id="VAR_043281" description="In NPC1; dbSNP:rs772622214." evidence="19">
    <original>T</original>
    <variation>N</variation>
    <location>
        <position position="1066"/>
    </location>
</feature>
<feature type="sequence variant" id="VAR_043282" description="In NPC1; dbSNP:rs746715353." evidence="16">
    <original>F</original>
    <variation>L</variation>
    <location>
        <position position="1087"/>
    </location>
</feature>
<feature type="sequence variant" id="VAR_008837" description="In NPC1; juvenile form; dbSNP:rs28942106." evidence="7">
    <original>Y</original>
    <variation>C</variation>
    <location>
        <position position="1088"/>
    </location>
</feature>
<feature type="sequence variant" id="VAR_043283" description="In NPC1; dbSNP:rs374526072." evidence="9">
    <original>E</original>
    <variation>K</variation>
    <location>
        <position position="1089"/>
    </location>
</feature>
<feature type="sequence variant" id="VAR_043284" description="In NPC1; dbSNP:rs1338658857." evidence="14">
    <original>I</original>
    <variation>T</variation>
    <location>
        <position position="1094"/>
    </location>
</feature>
<feature type="sequence variant" id="VAR_043285" description="In NPC1; dbSNP:rs758829443." evidence="20">
    <original>D</original>
    <variation>N</variation>
    <location>
        <position position="1097"/>
    </location>
</feature>
<feature type="sequence variant" id="VAR_043286" description="In NPC1." evidence="16">
    <original>N</original>
    <variation>I</variation>
    <location>
        <position position="1137"/>
    </location>
</feature>
<feature type="sequence variant" id="VAR_043287" description="In NPC1; dbSNP:rs2058616184." evidence="16">
    <original>G</original>
    <variation>V</variation>
    <location>
        <position position="1140"/>
    </location>
</feature>
<feature type="sequence variant" id="VAR_043288" description="In NPC1; dbSNP:rs778878523." evidence="8 9">
    <original>M</original>
    <variation>T</variation>
    <location>
        <position position="1142"/>
    </location>
</feature>
<feature type="sequence variant" id="VAR_043289" description="In NPC1; dbSNP:rs34715591." evidence="9">
    <original>N</original>
    <variation>K</variation>
    <location>
        <position position="1150"/>
    </location>
</feature>
<feature type="sequence variant" id="VAR_043290" description="In NPC1; dbSNP:rs28942105." evidence="19">
    <original>N</original>
    <variation>I</variation>
    <location>
        <position position="1156"/>
    </location>
</feature>
<feature type="sequence variant" id="VAR_008838" description="In NPC1; dbSNP:rs28942105." evidence="9 11 13 19">
    <original>N</original>
    <variation>S</variation>
    <location>
        <position position="1156"/>
    </location>
</feature>
<feature type="sequence variant" id="VAR_043291" description="In NPC1; dbSNP:rs748862167." evidence="9">
    <original>V</original>
    <variation>M</variation>
    <location>
        <position position="1165"/>
    </location>
</feature>
<feature type="sequence variant" id="VAR_008839" description="In NPC1.">
    <original>F</original>
    <variation>L</variation>
    <location>
        <position position="1167"/>
    </location>
</feature>
<feature type="sequence variant" id="VAR_043292" description="In NPC1; dbSNP:rs1555631998." evidence="8">
    <original>C</original>
    <variation>Y</variation>
    <location>
        <position position="1168"/>
    </location>
</feature>
<feature type="sequence variant" id="VAR_043293" description="In NPC1; dbSNP:rs780175800." evidence="20">
    <original>A</original>
    <variation>V</variation>
    <location>
        <position position="1174"/>
    </location>
</feature>
<feature type="sequence variant" id="VAR_008840" description="In NPC1; dbSNP:rs200444084." evidence="8 9 20">
    <original>R</original>
    <variation>H</variation>
    <location>
        <position position="1186"/>
    </location>
</feature>
<feature type="sequence variant" id="VAR_043294" description="In NPC1; dbSNP:rs369098773." evidence="9">
    <original>E</original>
    <variation>G</variation>
    <location>
        <position position="1189"/>
    </location>
</feature>
<feature type="sequence variant" id="VAR_043295" description="In NPC1; dbSNP:rs758902805." evidence="16">
    <original>T</original>
    <variation>K</variation>
    <location>
        <position position="1205"/>
    </location>
</feature>
<feature type="sequence variant" id="VAR_043296" description="In NPC1; dbSNP:rs758902805." evidence="7">
    <original>T</original>
    <variation>R</variation>
    <location>
        <position position="1205"/>
    </location>
</feature>
<feature type="sequence variant" id="VAR_043297" description="In NPC1; dbSNP:rs753419933." evidence="18">
    <original>V</original>
    <variation>L</variation>
    <location>
        <position position="1212"/>
    </location>
</feature>
<feature type="sequence variant" id="VAR_008841" description="In NPC1; juvenile form; dbSNP:rs120074131." evidence="7">
    <original>L</original>
    <variation>F</variation>
    <location>
        <position position="1213"/>
    </location>
</feature>
<feature type="sequence variant" id="VAR_008842" description="In NPC1; dbSNP:rs766178353." evidence="4">
    <original>L</original>
    <variation>V</variation>
    <location>
        <position position="1213"/>
    </location>
</feature>
<feature type="sequence variant" id="VAR_043298" description="In NPC1; dbSNP:rs2058572854." evidence="20">
    <original>A</original>
    <variation>V</variation>
    <location>
        <position position="1216"/>
    </location>
</feature>
<feature type="sequence variant" id="VAR_008843">
    <original>I</original>
    <variation>T</variation>
    <location>
        <position position="1220"/>
    </location>
</feature>
<feature type="sequence variant" id="VAR_043299" description="In NPC1; dbSNP:rs2058572301." evidence="19">
    <original>F</original>
    <variation>L</variation>
    <location>
        <position position="1224"/>
    </location>
</feature>
<feature type="sequence variant" id="VAR_043300" description="In NPC1; dbSNP:rs761653115." evidence="7">
    <original>G</original>
    <variation>E</variation>
    <location>
        <position position="1236"/>
    </location>
</feature>
<feature type="sequence variant" id="VAR_043301" description="In NPC1; dbSNP:rs745892286." evidence="20">
    <original>G</original>
    <variation>R</variation>
    <location>
        <position position="1240"/>
    </location>
</feature>
<feature type="sequence variant" id="VAR_043302" description="In NPC1; dbSNP:rs1415921261." evidence="16">
    <original>S</original>
    <variation>G</variation>
    <location>
        <position position="1249"/>
    </location>
</feature>
<feature type="sequence variant" id="VAR_008844" description="In dbSNP:rs1805084." evidence="3 16 18 19">
    <original>R</original>
    <variation>Q</variation>
    <location>
        <position position="1266"/>
    </location>
</feature>
<feature type="mutagenesis site" description="Decreases affinity for NPC2. Abolishes cholesterol transfer from NPC2 to NPC1." evidence="32">
    <location>
        <begin position="25"/>
        <end position="257"/>
    </location>
</feature>
<feature type="mutagenesis site" description="Nearly abolishes 25-hydroxycholesterol binding. Reduces cholesterol binding." evidence="25">
    <original>VW</original>
    <variation>AA</variation>
    <location>
        <begin position="26"/>
        <end position="27"/>
    </location>
</feature>
<feature type="mutagenesis site" description="Strongly reduces cholesterol and 25-hydroxycholesterol binding." evidence="25">
    <original>RYN</original>
    <variation>AAA</variation>
    <location>
        <begin position="39"/>
        <end position="41"/>
    </location>
</feature>
<feature type="mutagenesis site" description="Nearly abolishes cholesterol and 25-hydroxycholesterol binding." evidence="25">
    <original>N</original>
    <variation>A</variation>
    <location>
        <position position="41"/>
    </location>
</feature>
<feature type="mutagenesis site" description="Loss of function." evidence="41">
    <original>C</original>
    <variation>S</variation>
    <location>
        <position position="63"/>
    </location>
</feature>
<feature type="mutagenesis site" description="Reduces glycosylation; when associated with Q-122 and Q-185. No effect on cholesterol and 25-hydroxycholesterol binding." evidence="25">
    <original>N</original>
    <variation>Q</variation>
    <location>
        <position position="70"/>
    </location>
</feature>
<feature type="mutagenesis site" description="Loss of function." evidence="41">
    <original>CC</original>
    <variation>SS</variation>
    <location>
        <begin position="74"/>
        <end position="75"/>
    </location>
</feature>
<feature type="mutagenesis site" description="Strongly reduces cholesterol and 25-hydroxycholesterol binding." evidence="25">
    <original>TL</original>
    <variation>AA</variation>
    <location>
        <begin position="82"/>
        <end position="83"/>
    </location>
</feature>
<feature type="mutagenesis site" description="Decreased affinity for NPC2 and decreased cholesterol transfer from NPC2 to NPC1; when associated with A-92 and A-96." evidence="32">
    <original>Q</original>
    <variation>A</variation>
    <location>
        <position position="88"/>
    </location>
</feature>
<feature type="mutagenesis site" description="Decreased affinity for NPC2 and decreased cholesterol transfer from NPC2 to NPC1; when associated with A-88 and A-96." evidence="32">
    <original>Q</original>
    <variation>A</variation>
    <location>
        <position position="92"/>
    </location>
</feature>
<feature type="mutagenesis site" description="Decreased affinity for NPC2 and decreased cholesterol transfer from NPC2 to NPC1; when associated with A-88 and A-92." evidence="32">
    <original>R</original>
    <variation>A</variation>
    <location>
        <position position="96"/>
    </location>
</feature>
<feature type="mutagenesis site" description="Loss of function." evidence="41">
    <original>C</original>
    <variation>S</variation>
    <location>
        <position position="97"/>
    </location>
</feature>
<feature type="mutagenesis site" description="Strongly reduces 25-hydroxycholesterol binding. No effect on cholesterol binding." evidence="25">
    <original>FY</original>
    <variation>AA</variation>
    <location>
        <begin position="101"/>
        <end position="102"/>
    </location>
</feature>
<feature type="mutagenesis site" description="Nearly abolishes cholesterol and 25-hydroxycholesterol binding." evidence="25">
    <original>NLF</original>
    <variation>AAA</variation>
    <location>
        <begin position="106"/>
        <end position="108"/>
    </location>
</feature>
<feature type="mutagenesis site" description="No effect on cholesterol and 25-hydroxycholesterol binding and transfer." evidence="25">
    <original>ELT</original>
    <variation>AAA</variation>
    <location>
        <begin position="110"/>
        <end position="112"/>
    </location>
</feature>
<feature type="mutagenesis site" description="Reduces glycosylation; when associated with Q-70 and Q-185. No effect on cholesterol and 25-hydroxycholesterol binding." evidence="25">
    <original>N</original>
    <variation>Q</variation>
    <location>
        <position position="122"/>
    </location>
</feature>
<feature type="mutagenesis site" description="Strongly reduces 25-hydroxycholesterol binding. No effect on cholesterol binding." evidence="25">
    <original>LQ</original>
    <variation>AA</variation>
    <location>
        <begin position="144"/>
        <end position="145"/>
    </location>
</feature>
<feature type="mutagenesis site" description="Strongly reduces 25-hydroxycholesterol binding. No effect on cholesterol binding." evidence="25">
    <original>YY</original>
    <variation>AA</variation>
    <location>
        <begin position="146"/>
        <end position="147"/>
    </location>
</feature>
<feature type="mutagenesis site" description="No effect on cholesterol or 25-hydroxycholesterol binding. Decreases affinity for NPC2. Strongly reduces cholesterol transfer to liposomes in a NPC2-dependent manner." evidence="25 32">
    <original>LL</original>
    <variation>AA</variation>
    <location>
        <begin position="175"/>
        <end position="176"/>
    </location>
</feature>
<feature type="mutagenesis site" description="Strongly reduces cholesterol transfer to liposomes in a NPC2-dependent manner." evidence="25">
    <original>DAD</original>
    <variation>AAA</variation>
    <location>
        <begin position="180"/>
        <end position="182"/>
    </location>
</feature>
<feature type="mutagenesis site" description="Reduces glycosylation; when associated with Q-70 and Q-122. No effect on cholesterol and 25-hydroxycholesterol binding. Strongly reduces cholesterol transfer to liposomes in a NPC2-dependent manner." evidence="25">
    <original>N</original>
    <variation>Q</variation>
    <location>
        <position position="185"/>
    </location>
</feature>
<feature type="mutagenesis site" description="Strongly reduces 25-hydroxycholesterol binding and cholesterol transfer to liposomes in a NPC2-dependent manner." evidence="25">
    <original>TN</original>
    <variation>AA</variation>
    <location>
        <begin position="187"/>
        <end position="188"/>
    </location>
</feature>
<feature type="mutagenesis site" description="No effect on cholesterol or 25-hydroxycholesterol binding. Nearly abolishes cholesterol transfer to liposomes in a NPC2-dependent manner." evidence="25">
    <original>EY</original>
    <variation>AA</variation>
    <location>
        <begin position="191"/>
        <end position="192"/>
    </location>
</feature>
<feature type="mutagenesis site" description="Strongly reduces 25-hydroxycholesterol binding. No effect on cholesterol binding." evidence="25">
    <original>NK</original>
    <variation>AA</variation>
    <location>
        <begin position="195"/>
        <end position="196"/>
    </location>
</feature>
<feature type="mutagenesis site" description="Strongly reduces cholesterol and 25-hydroxycholesterol binding." evidence="25">
    <original>DN</original>
    <variation>AA</variation>
    <location>
        <begin position="197"/>
        <end position="198"/>
    </location>
</feature>
<feature type="mutagenesis site" description="Strongly reduces 25-hydroxycholesterol binding and cholesterol transfer to liposomes in a NPC2-dependent manner." evidence="25">
    <original>GQ</original>
    <variation>AA</variation>
    <location>
        <begin position="199"/>
        <end position="200"/>
    </location>
</feature>
<feature type="mutagenesis site" description="Abolishes cholesterol and 25-hydroxycholesterol binding. Abolishes cholesterol transfer from NPC2 to NPC1." evidence="25 32">
    <original>PF</original>
    <variation>AA</variation>
    <location>
        <begin position="202"/>
        <end position="203"/>
    </location>
</feature>
<feature type="mutagenesis site" description="Strongly reduces cholesterol and 25-hydroxycholesterol binding." evidence="25">
    <original>TI</original>
    <variation>AA</variation>
    <location>
        <begin position="204"/>
        <end position="205"/>
    </location>
</feature>
<feature type="mutagenesis site" description="Decreased cholesterol transport." evidence="36">
    <location>
        <begin position="230"/>
        <end position="234"/>
    </location>
</feature>
<feature type="mutagenesis site" description="Decreases affinity for NPC2. Abolishes cholesterol transfer from NPC2 to NPC1." evidence="32">
    <location>
        <begin position="249"/>
        <end position="257"/>
    </location>
</feature>
<feature type="mutagenesis site" description="Strongly reduces interaction with ebolavirus glycoprotein." evidence="30">
    <original>YP</original>
    <variation>GG</variation>
    <location>
        <begin position="423"/>
        <end position="424"/>
    </location>
</feature>
<feature type="mutagenesis site" description="Loss of interaction with ebolavirus glycoprotein." evidence="30">
    <original>F</original>
    <variation>A</variation>
    <variation>G</variation>
    <location>
        <position position="503"/>
    </location>
</feature>
<feature type="mutagenesis site" description="Loss of interaction with ebolavirus glycoprotein." evidence="30">
    <original>F</original>
    <variation>A</variation>
    <variation>G</variation>
    <location>
        <position position="504"/>
    </location>
</feature>
<feature type="mutagenesis site" description="Loss of interaction with ebolavirus glycoprotein." evidence="30">
    <original>Y</original>
    <variation>A</variation>
    <location>
        <position position="506"/>
    </location>
</feature>
<feature type="mutagenesis site" description="Loss of function." evidence="25">
    <original>G</original>
    <variation>R</variation>
    <location>
        <position position="660"/>
    </location>
</feature>
<feature type="mutagenesis site" description="Abolishes cholesterol transport. No effect on subcellular location." evidence="36">
    <original>P</original>
    <variation>S</variation>
    <location>
        <position position="691"/>
    </location>
</feature>
<feature type="mutagenesis site" description="Abolishes cholesterol transport. No effect on subcellular location." evidence="36">
    <original>CGGMGCNND</original>
    <variation>A</variation>
    <location>
        <begin position="909"/>
        <end position="917"/>
    </location>
</feature>
<feature type="mutagenesis site" description="Loss of location in lysosomes." evidence="41">
    <location>
        <begin position="1275"/>
        <end position="1278"/>
    </location>
</feature>
<feature type="strand" evidence="59">
    <location>
        <begin position="26"/>
        <end position="35"/>
    </location>
</feature>
<feature type="strand" evidence="59">
    <location>
        <begin position="38"/>
        <end position="43"/>
    </location>
</feature>
<feature type="helix" evidence="59">
    <location>
        <begin position="53"/>
        <end position="55"/>
    </location>
</feature>
<feature type="helix" evidence="59">
    <location>
        <begin position="56"/>
        <end position="62"/>
    </location>
</feature>
<feature type="helix" evidence="59">
    <location>
        <begin position="64"/>
        <end position="66"/>
    </location>
</feature>
<feature type="strand" evidence="63">
    <location>
        <begin position="68"/>
        <end position="70"/>
    </location>
</feature>
<feature type="strand" evidence="59">
    <location>
        <begin position="72"/>
        <end position="74"/>
    </location>
</feature>
<feature type="helix" evidence="59">
    <location>
        <begin position="77"/>
        <end position="85"/>
    </location>
</feature>
<feature type="helix" evidence="59">
    <location>
        <begin position="88"/>
        <end position="94"/>
    </location>
</feature>
<feature type="helix" evidence="59">
    <location>
        <begin position="98"/>
        <end position="113"/>
    </location>
</feature>
<feature type="helix" evidence="59">
    <location>
        <begin position="117"/>
        <end position="120"/>
    </location>
</feature>
<feature type="strand" evidence="59">
    <location>
        <begin position="121"/>
        <end position="130"/>
    </location>
</feature>
<feature type="turn" evidence="59">
    <location>
        <begin position="132"/>
        <end position="134"/>
    </location>
</feature>
<feature type="strand" evidence="59">
    <location>
        <begin position="137"/>
        <end position="148"/>
    </location>
</feature>
<feature type="helix" evidence="59">
    <location>
        <begin position="150"/>
        <end position="160"/>
    </location>
</feature>
<feature type="strand" evidence="59">
    <location>
        <begin position="168"/>
        <end position="171"/>
    </location>
</feature>
<feature type="helix" evidence="59">
    <location>
        <begin position="173"/>
        <end position="176"/>
    </location>
</feature>
<feature type="strand" evidence="59">
    <location>
        <begin position="177"/>
        <end position="179"/>
    </location>
</feature>
<feature type="turn" evidence="59">
    <location>
        <begin position="181"/>
        <end position="183"/>
    </location>
</feature>
<feature type="helix" evidence="59">
    <location>
        <begin position="186"/>
        <end position="193"/>
    </location>
</feature>
<feature type="helix" evidence="59">
    <location>
        <begin position="196"/>
        <end position="198"/>
    </location>
</feature>
<feature type="strand" evidence="59">
    <location>
        <begin position="199"/>
        <end position="209"/>
    </location>
</feature>
<feature type="strand" evidence="63">
    <location>
        <begin position="227"/>
        <end position="229"/>
    </location>
</feature>
<feature type="helix" evidence="59">
    <location>
        <begin position="240"/>
        <end position="242"/>
    </location>
</feature>
<feature type="helix" evidence="59">
    <location>
        <begin position="244"/>
        <end position="246"/>
    </location>
</feature>
<feature type="strand" evidence="63">
    <location>
        <begin position="262"/>
        <end position="265"/>
    </location>
</feature>
<feature type="helix" evidence="63">
    <location>
        <begin position="269"/>
        <end position="290"/>
    </location>
</feature>
<feature type="turn" evidence="63">
    <location>
        <begin position="291"/>
        <end position="293"/>
    </location>
</feature>
<feature type="helix" evidence="63">
    <location>
        <begin position="327"/>
        <end position="348"/>
    </location>
</feature>
<feature type="helix" evidence="63">
    <location>
        <begin position="350"/>
        <end position="365"/>
    </location>
</feature>
<feature type="helix" evidence="63">
    <location>
        <begin position="366"/>
        <end position="370"/>
    </location>
</feature>
<feature type="helix" evidence="61">
    <location>
        <begin position="380"/>
        <end position="382"/>
    </location>
</feature>
<feature type="helix" evidence="60">
    <location>
        <begin position="385"/>
        <end position="398"/>
    </location>
</feature>
<feature type="turn" evidence="60">
    <location>
        <begin position="399"/>
        <end position="402"/>
    </location>
</feature>
<feature type="strand" evidence="60">
    <location>
        <begin position="403"/>
        <end position="411"/>
    </location>
</feature>
<feature type="strand" evidence="60">
    <location>
        <begin position="418"/>
        <end position="420"/>
    </location>
</feature>
<feature type="strand" evidence="64">
    <location>
        <begin position="423"/>
        <end position="425"/>
    </location>
</feature>
<feature type="strand" evidence="60">
    <location>
        <begin position="429"/>
        <end position="431"/>
    </location>
</feature>
<feature type="helix" evidence="60">
    <location>
        <begin position="433"/>
        <end position="435"/>
    </location>
</feature>
<feature type="helix" evidence="60">
    <location>
        <begin position="437"/>
        <end position="451"/>
    </location>
</feature>
<feature type="strand" evidence="60">
    <location>
        <begin position="454"/>
        <end position="457"/>
    </location>
</feature>
<feature type="strand" evidence="60">
    <location>
        <begin position="460"/>
        <end position="463"/>
    </location>
</feature>
<feature type="helix" evidence="60">
    <location>
        <begin position="464"/>
        <end position="467"/>
    </location>
</feature>
<feature type="turn" evidence="60">
    <location>
        <begin position="471"/>
        <end position="475"/>
    </location>
</feature>
<feature type="helix" evidence="60">
    <location>
        <begin position="484"/>
        <end position="488"/>
    </location>
</feature>
<feature type="helix" evidence="60">
    <location>
        <begin position="492"/>
        <end position="495"/>
    </location>
</feature>
<feature type="strand" evidence="60">
    <location>
        <begin position="505"/>
        <end position="507"/>
    </location>
</feature>
<feature type="helix" evidence="60">
    <location>
        <begin position="509"/>
        <end position="516"/>
    </location>
</feature>
<feature type="turn" evidence="60">
    <location>
        <begin position="526"/>
        <end position="530"/>
    </location>
</feature>
<feature type="strand" evidence="60">
    <location>
        <begin position="536"/>
        <end position="538"/>
    </location>
</feature>
<feature type="helix" evidence="60">
    <location>
        <begin position="543"/>
        <end position="546"/>
    </location>
</feature>
<feature type="strand" evidence="60">
    <location>
        <begin position="547"/>
        <end position="549"/>
    </location>
</feature>
<feature type="helix" evidence="60">
    <location>
        <begin position="555"/>
        <end position="557"/>
    </location>
</feature>
<feature type="strand" evidence="60">
    <location>
        <begin position="559"/>
        <end position="568"/>
    </location>
</feature>
<feature type="helix" evidence="60">
    <location>
        <begin position="574"/>
        <end position="592"/>
    </location>
</feature>
<feature type="strand" evidence="60">
    <location>
        <begin position="600"/>
        <end position="603"/>
    </location>
</feature>
<feature type="helix" evidence="61">
    <location>
        <begin position="608"/>
        <end position="611"/>
    </location>
</feature>
<feature type="turn" evidence="62">
    <location>
        <begin position="617"/>
        <end position="620"/>
    </location>
</feature>
<feature type="helix" evidence="63">
    <location>
        <begin position="621"/>
        <end position="638"/>
    </location>
</feature>
<feature type="turn" evidence="63">
    <location>
        <begin position="646"/>
        <end position="650"/>
    </location>
</feature>
<feature type="helix" evidence="63">
    <location>
        <begin position="654"/>
        <end position="678"/>
    </location>
</feature>
<feature type="helix" evidence="63">
    <location>
        <begin position="686"/>
        <end position="710"/>
    </location>
</feature>
<feature type="helix" evidence="63">
    <location>
        <begin position="720"/>
        <end position="749"/>
    </location>
</feature>
<feature type="helix" evidence="63">
    <location>
        <begin position="755"/>
        <end position="791"/>
    </location>
</feature>
<feature type="strand" evidence="63">
    <location>
        <begin position="796"/>
        <end position="798"/>
    </location>
</feature>
<feature type="helix" evidence="63">
    <location>
        <begin position="818"/>
        <end position="823"/>
    </location>
</feature>
<feature type="helix" evidence="63">
    <location>
        <begin position="825"/>
        <end position="829"/>
    </location>
</feature>
<feature type="turn" evidence="63">
    <location>
        <begin position="832"/>
        <end position="834"/>
    </location>
</feature>
<feature type="helix" evidence="63">
    <location>
        <begin position="835"/>
        <end position="851"/>
    </location>
</feature>
<feature type="helix" evidence="63">
    <location>
        <begin position="853"/>
        <end position="855"/>
    </location>
</feature>
<feature type="turn" evidence="62">
    <location>
        <begin position="862"/>
        <end position="865"/>
    </location>
</feature>
<feature type="strand" evidence="63">
    <location>
        <begin position="868"/>
        <end position="870"/>
    </location>
</feature>
<feature type="helix" evidence="63">
    <location>
        <begin position="871"/>
        <end position="882"/>
    </location>
</feature>
<feature type="strand" evidence="63">
    <location>
        <begin position="887"/>
        <end position="893"/>
    </location>
</feature>
<feature type="helix" evidence="63">
    <location>
        <begin position="902"/>
        <end position="906"/>
    </location>
</feature>
<feature type="strand" evidence="63">
    <location>
        <begin position="911"/>
        <end position="914"/>
    </location>
</feature>
<feature type="strand" evidence="63">
    <location>
        <begin position="916"/>
        <end position="918"/>
    </location>
</feature>
<feature type="helix" evidence="63">
    <location>
        <begin position="919"/>
        <end position="929"/>
    </location>
</feature>
<feature type="strand" evidence="63">
    <location>
        <begin position="931"/>
        <end position="933"/>
    </location>
</feature>
<feature type="helix" evidence="63">
    <location>
        <begin position="943"/>
        <end position="950"/>
    </location>
</feature>
<feature type="turn" evidence="63">
    <location>
        <begin position="952"/>
        <end position="954"/>
    </location>
</feature>
<feature type="strand" evidence="62">
    <location>
        <begin position="958"/>
        <end position="960"/>
    </location>
</feature>
<feature type="turn" evidence="63">
    <location>
        <begin position="961"/>
        <end position="963"/>
    </location>
</feature>
<feature type="strand" evidence="63">
    <location>
        <begin position="969"/>
        <end position="971"/>
    </location>
</feature>
<feature type="strand" evidence="63">
    <location>
        <begin position="977"/>
        <end position="980"/>
    </location>
</feature>
<feature type="helix" evidence="63">
    <location>
        <begin position="984"/>
        <end position="987"/>
    </location>
</feature>
<feature type="helix" evidence="63">
    <location>
        <begin position="993"/>
        <end position="1004"/>
    </location>
</feature>
<feature type="turn" evidence="63">
    <location>
        <begin position="1009"/>
        <end position="1011"/>
    </location>
</feature>
<feature type="turn" evidence="63">
    <location>
        <begin position="1017"/>
        <end position="1022"/>
    </location>
</feature>
<feature type="strand" evidence="63">
    <location>
        <begin position="1023"/>
        <end position="1025"/>
    </location>
</feature>
<feature type="helix" evidence="63">
    <location>
        <begin position="1029"/>
        <end position="1031"/>
    </location>
</feature>
<feature type="strand" evidence="63">
    <location>
        <begin position="1033"/>
        <end position="1042"/>
    </location>
</feature>
<feature type="helix" evidence="63">
    <location>
        <begin position="1048"/>
        <end position="1069"/>
    </location>
</feature>
<feature type="strand" evidence="63">
    <location>
        <begin position="1078"/>
        <end position="1081"/>
    </location>
</feature>
<feature type="helix" evidence="63">
    <location>
        <begin position="1085"/>
        <end position="1088"/>
    </location>
</feature>
<feature type="helix" evidence="63">
    <location>
        <begin position="1090"/>
        <end position="1092"/>
    </location>
</feature>
<feature type="helix" evidence="63">
    <location>
        <begin position="1094"/>
        <end position="1116"/>
    </location>
</feature>
<feature type="strand" evidence="62">
    <location>
        <begin position="1117"/>
        <end position="1119"/>
    </location>
</feature>
<feature type="helix" evidence="63">
    <location>
        <begin position="1121"/>
        <end position="1145"/>
    </location>
</feature>
<feature type="helix" evidence="63">
    <location>
        <begin position="1153"/>
        <end position="1176"/>
    </location>
</feature>
<feature type="helix" evidence="63">
    <location>
        <begin position="1183"/>
        <end position="1201"/>
    </location>
</feature>
<feature type="helix" evidence="63">
    <location>
        <begin position="1203"/>
        <end position="1213"/>
    </location>
</feature>
<feature type="helix" evidence="63">
    <location>
        <begin position="1219"/>
        <end position="1224"/>
    </location>
</feature>
<feature type="helix" evidence="63">
    <location>
        <begin position="1226"/>
        <end position="1251"/>
    </location>
</feature>
<name>NPC1_HUMAN</name>
<organism>
    <name type="scientific">Homo sapiens</name>
    <name type="common">Human</name>
    <dbReference type="NCBI Taxonomy" id="9606"/>
    <lineage>
        <taxon>Eukaryota</taxon>
        <taxon>Metazoa</taxon>
        <taxon>Chordata</taxon>
        <taxon>Craniata</taxon>
        <taxon>Vertebrata</taxon>
        <taxon>Euteleostomi</taxon>
        <taxon>Mammalia</taxon>
        <taxon>Eutheria</taxon>
        <taxon>Euarchontoglires</taxon>
        <taxon>Primates</taxon>
        <taxon>Haplorrhini</taxon>
        <taxon>Catarrhini</taxon>
        <taxon>Hominidae</taxon>
        <taxon>Homo</taxon>
    </lineage>
</organism>
<sequence>MTARGLALGLLLLLLCPAQVFSQSCVWYGECGIAYGDKRYNCEYSGPPKPLPKDGYDLVQELCPGFFFGNVSLCCDVRQLQTLKDNLQLPLQFLSRCPSCFYNLLNLFCELTCSPRQSQFLNVTATEDYVDPVTNQTKTNVKELQYYVGQSFANAMYNACRDVEAPSSNDKALGLLCGKDADACNATNWIEYMFNKDNGQAPFTITPVFSDFPVHGMEPMNNATKGCDESVDEVTAPCSCQDCSIVCGPKPQPPPPPAPWTILGLDAMYVIMWITYMAFLLVFFGAFFAVWCYRKRYFVSEYTPIDSNIAFSVNASDKGEASCCDPVSAAFEGCLRRLFTRWGSFCVRNPGCVIFFSLVFITACSSGLVFVRVTTNPVDLWSAPSSQARLEKEYFDQHFGPFFRTEQLIIRAPLTDKHIYQPYPSGADVPFGPPLDIQILHQVLDLQIAIENITASYDNETVTLQDICLAPLSPYNTNCTILSVLNYFQNSHSVLDHKKGDDFFVYADYHTHFLYCVRAPASLNDTSLLHDPCLGTFGGPVFPWLVLGGYDDQNYNNATALVITFPVNNYYNDTEKLQRAQAWEKEFINFVKNYKNPNLTISFTAERSIEDELNRESDSDVFTVVISYAIMFLYISLALGHMKSCRRLLVDSKVSLGIAGILIVLSSVACSLGVFSYIGLPLTLIVIEVIPFLVLAVGVDNIFILVQAYQRDERLQGETLDQQLGRVLGEVAPSMFLSSFSETVAFFLGALSVMPAVHTFSLFAGLAVFIDFLLQITCFVSLLGLDIKRQEKNRLDIFCCVRGAEDGTSVQASESCLFRFFKNSYSPLLLKDWMRPIVIAIFVGVLSFSIAVLNKVDIGLDQSLSMPDDSYMVDYFKSISQYLHAGPPVYFVLEEGHDYTSSKGQNMVCGGMGCNNDSLVQQIFNAAQLDNYTRIGFAPSSWIDDYFDWVKPQSSCCRVDNITDQFCNASVVDPACVRCRPLTPEGKQRPQGGDFMRFLPMFLSDNPNPKCGKGGHAAYSSAVNILLGHGTRVGATYFMTYHTVLQTSADFIDALKKARLIASNVTETMGINGSAYRVFPYSVFYVFYEQYLTIIDDTIFNLGVSLGAIFLVTMVLLGCELWSAVIMCATIAMVLVNMFGVMWLWGISLNAVSLVNLVMSCGISVEFCSHITRAFTVSMKGSRVERAEEALAHMGSSVFSGITLTKFGGIVVLAFAKSQIFQIFYFRMYLAMVLLGATHGLIFLPVLLSYIGPSVNKAKSCATEERYKGTERERLLNF</sequence>
<keyword id="KW-0002">3D-structure</keyword>
<keyword id="KW-0025">Alternative splicing</keyword>
<keyword id="KW-0153">Cholesterol metabolism</keyword>
<keyword id="KW-0225">Disease variant</keyword>
<keyword id="KW-1015">Disulfide bond</keyword>
<keyword id="KW-0967">Endosome</keyword>
<keyword id="KW-0325">Glycoprotein</keyword>
<keyword id="KW-1183">Host cell receptor for virus entry</keyword>
<keyword id="KW-0945">Host-virus interaction</keyword>
<keyword id="KW-0443">Lipid metabolism</keyword>
<keyword id="KW-0445">Lipid transport</keyword>
<keyword id="KW-0458">Lysosome</keyword>
<keyword id="KW-0472">Membrane</keyword>
<keyword id="KW-1054">Niemann-Pick disease</keyword>
<keyword id="KW-1267">Proteomics identification</keyword>
<keyword id="KW-0675">Receptor</keyword>
<keyword id="KW-1185">Reference proteome</keyword>
<keyword id="KW-0732">Signal</keyword>
<keyword id="KW-0753">Steroid metabolism</keyword>
<keyword id="KW-1207">Sterol metabolism</keyword>
<keyword id="KW-0812">Transmembrane</keyword>
<keyword id="KW-1133">Transmembrane helix</keyword>
<keyword id="KW-0813">Transport</keyword>
<comment type="function">
    <text evidence="6 15 23 25 32 33 35 36 39 41 44">Intracellular cholesterol transporter which acts in concert with NPC2 and plays an important role in the egress of cholesterol from the endosomal/lysosomal compartment (PubMed:10821832, PubMed:12554680, PubMed:18772377, PubMed:27238017, PubMed:9211849, PubMed:9927649). Unesterified cholesterol that has been released from LDLs in the lumen of the late endosomes/lysosomes is transferred by NPC2 to the cholesterol-binding pocket in the N-terminal domain of NPC1 (PubMed:18772377, PubMed:19563754, PubMed:27238017, PubMed:27378690, PubMed:28784760, PubMed:9211849, PubMed:9927649). Cholesterol binds to NPC1 with the hydroxyl group buried in the binding pocket (PubMed:19563754). Binds oxysterol with higher affinity than cholesterol. May play a role in vesicular trafficking in glia, a process that may be crucial for maintaining the structural and functional integrity of nerve terminals (Probable). Inhibits cholesterol-mediated mTORC1 activation throught its interaction with SLC38A9 (PubMed:28336668).</text>
</comment>
<comment type="function">
    <text evidence="27 29 37">(Microbial infection) Acts as an endosomal entry receptor for ebolavirus.</text>
</comment>
<comment type="catalytic activity">
    <reaction evidence="23">
        <text>cholesterol(in) = cholesterol(out)</text>
        <dbReference type="Rhea" id="RHEA:39747"/>
        <dbReference type="ChEBI" id="CHEBI:16113"/>
    </reaction>
</comment>
<comment type="subunit">
    <text evidence="23 26 29 32 34 35 38">Interacts (via the second lumenal domain) with NPC2 (PubMed:18772377, PubMed:27238017, PubMed:27551080). Interacts with TMEM97; the interaction may decrease NPC1 availability to the cell (PubMed:19583955, PubMed:34799735). Interacts with TIM1 (PubMed:25855742). Interacts with SLC38A9; this interaction inhibits cholesterol-mediated mTORC1 activation via its sterol transport activity (PubMed:28336668).</text>
</comment>
<comment type="subunit">
    <text evidence="27 30 32">(Microbial infection) Interacts with ebolavirus glycoprotein.</text>
</comment>
<comment type="interaction">
    <interactant intactId="EBI-2368710">
        <id>O15118</id>
    </interactant>
    <interactant intactId="EBI-603614">
        <id>Q03135</id>
        <label>CAV1</label>
    </interactant>
    <organismsDiffer>false</organismsDiffer>
    <experiments>3</experiments>
</comment>
<comment type="interaction">
    <interactant intactId="EBI-2368710">
        <id>O15118</id>
    </interactant>
    <interactant intactId="EBI-2368946">
        <id>P61916</id>
        <label>NPC2</label>
    </interactant>
    <organismsDiffer>false</organismsDiffer>
    <experiments>3</experiments>
</comment>
<comment type="interaction">
    <interactant intactId="EBI-2368710">
        <id>O15118</id>
    </interactant>
    <interactant intactId="EBI-22015020">
        <id>P87666</id>
        <label>GP</label>
    </interactant>
    <organismsDiffer>true</organismsDiffer>
    <experiments>3</experiments>
</comment>
<comment type="interaction">
    <interactant intactId="EBI-2368710">
        <id>O15118</id>
    </interactant>
    <interactant intactId="EBI-13643336">
        <id>X5HMX4</id>
        <label>GP</label>
    </interactant>
    <organismsDiffer>true</organismsDiffer>
    <experiments>3</experiments>
</comment>
<comment type="interaction">
    <interactant intactId="EBI-2368710">
        <id>O15118</id>
    </interactant>
    <interactant intactId="EBI-25475856">
        <id>P0DTC9</id>
        <label>N</label>
    </interactant>
    <organismsDiffer>true</organismsDiffer>
    <experiments>3</experiments>
</comment>
<comment type="subcellular location">
    <subcellularLocation>
        <location evidence="15 33">Late endosome membrane</location>
        <topology evidence="6 32 36">Multi-pass membrane protein</topology>
    </subcellularLocation>
    <subcellularLocation>
        <location evidence="22 33 41">Lysosome membrane</location>
        <topology evidence="6 32 36">Multi-pass membrane protein</topology>
    </subcellularLocation>
</comment>
<comment type="alternative products">
    <event type="alternative splicing"/>
    <isoform>
        <id>O15118-1</id>
        <name>1</name>
        <sequence type="displayed"/>
    </isoform>
    <isoform>
        <id>O15118-2</id>
        <name>2</name>
        <sequence type="described" ref="VSP_056431 VSP_056432 VSP_056433"/>
    </isoform>
</comment>
<comment type="domain">
    <text evidence="41">A cysteine-rich N-terminal domain and a C-terminal domain containing a di-leucine motif necessary for lysosomal targeting are critical for mobilization of cholesterol from lysosomes.</text>
</comment>
<comment type="PTM">
    <text evidence="6 24 25">N-glycosylated.</text>
</comment>
<comment type="disease" evidence="3 4 5 7 8 9 10 11 12 13 14 15 16 18 19 20 21 32 39 40">
    <disease id="DI-02055">
        <name>Niemann-Pick disease C1</name>
        <acronym>NPC1</acronym>
        <description>A lysosomal storage disorder that affects the viscera and the central nervous system. It is due to defective intracellular processing and transport of low-density lipoprotein derived cholesterol. It causes accumulation of cholesterol in lysosomes, with delayed induction of cholesterol homeostatic reactions. Niemann-Pick disease type C1 has a highly variable clinical phenotype. Clinical features include variable hepatosplenomegaly and severe progressive neurological dysfunction such as ataxia, dystonia and dementia. The age of onset can vary from infancy to late adulthood. An allelic variant of Niemann-Pick disease type C1 is found in people with Nova Scotia ancestry. Patients with the Nova Scotian clinical variant are less severely affected.</description>
        <dbReference type="MIM" id="257220"/>
    </disease>
    <text>The disease is caused by variants affecting the gene represented in this entry.</text>
</comment>
<comment type="similarity">
    <text evidence="44">Belongs to the patched family.</text>
</comment>
<gene>
    <name evidence="47" type="primary">NPC1</name>
</gene>